<accession>Q13263</accession>
<accession>O00677</accession>
<accession>Q7Z632</accession>
<accession>Q93040</accession>
<accession>Q96IM1</accession>
<feature type="initiator methionine" description="Removed" evidence="54 55 63 66 67 68 69">
    <location>
        <position position="1"/>
    </location>
</feature>
<feature type="chain" id="PRO_0000056392" description="Transcription intermediary factor 1-beta">
    <location>
        <begin position="2"/>
        <end position="835"/>
    </location>
</feature>
<feature type="domain" description="Bromo" evidence="4">
    <location>
        <begin position="695"/>
        <end position="799"/>
    </location>
</feature>
<feature type="zinc finger region" description="RING-type" evidence="6">
    <location>
        <begin position="65"/>
        <end position="121"/>
    </location>
</feature>
<feature type="zinc finger region" description="B box-type 1; atypical" evidence="3">
    <location>
        <begin position="148"/>
        <end position="195"/>
    </location>
</feature>
<feature type="zinc finger region" description="B box-type 2" evidence="3">
    <location>
        <begin position="204"/>
        <end position="245"/>
    </location>
</feature>
<feature type="zinc finger region" description="PHD-type" evidence="5">
    <location>
        <begin position="625"/>
        <end position="672"/>
    </location>
</feature>
<feature type="region of interest" description="Disordered" evidence="7">
    <location>
        <begin position="1"/>
        <end position="49"/>
    </location>
</feature>
<feature type="region of interest" description="RBCC domain">
    <location>
        <begin position="65"/>
        <end position="376"/>
    </location>
</feature>
<feature type="region of interest" description="Leucine zipper alpha helical coiled-coil region">
    <location>
        <begin position="246"/>
        <end position="376"/>
    </location>
</feature>
<feature type="region of interest" description="Interaction with MAGEC2">
    <location>
        <begin position="247"/>
        <end position="376"/>
    </location>
</feature>
<feature type="region of interest" description="Involved in binding PPP1CA">
    <location>
        <begin position="366"/>
        <end position="370"/>
    </location>
</feature>
<feature type="region of interest" description="Disordered" evidence="7">
    <location>
        <begin position="411"/>
        <end position="480"/>
    </location>
</feature>
<feature type="region of interest" description="HP1 box">
    <location>
        <begin position="476"/>
        <end position="513"/>
    </location>
</feature>
<feature type="region of interest" description="Disordered" evidence="7">
    <location>
        <begin position="584"/>
        <end position="618"/>
    </location>
</feature>
<feature type="region of interest" description="Disordered" evidence="7">
    <location>
        <begin position="815"/>
        <end position="835"/>
    </location>
</feature>
<feature type="short sequence motif" description="PxVxL motif">
    <location>
        <begin position="481"/>
        <end position="494"/>
    </location>
</feature>
<feature type="compositionally biased region" description="Low complexity" evidence="7">
    <location>
        <begin position="1"/>
        <end position="19"/>
    </location>
</feature>
<feature type="compositionally biased region" description="Low complexity" evidence="7">
    <location>
        <begin position="35"/>
        <end position="49"/>
    </location>
</feature>
<feature type="compositionally biased region" description="Polar residues" evidence="7">
    <location>
        <begin position="434"/>
        <end position="443"/>
    </location>
</feature>
<feature type="binding site" evidence="3">
    <location>
        <position position="153"/>
    </location>
    <ligand>
        <name>Zn(2+)</name>
        <dbReference type="ChEBI" id="CHEBI:29105"/>
        <label>1</label>
    </ligand>
</feature>
<feature type="binding site" evidence="3">
    <location>
        <position position="156"/>
    </location>
    <ligand>
        <name>Zn(2+)</name>
        <dbReference type="ChEBI" id="CHEBI:29105"/>
        <label>1</label>
    </ligand>
</feature>
<feature type="binding site" evidence="3">
    <location>
        <position position="177"/>
    </location>
    <ligand>
        <name>Zn(2+)</name>
        <dbReference type="ChEBI" id="CHEBI:29105"/>
        <label>1</label>
    </ligand>
</feature>
<feature type="binding site" evidence="3">
    <location>
        <position position="181"/>
    </location>
    <ligand>
        <name>Zn(2+)</name>
        <dbReference type="ChEBI" id="CHEBI:29105"/>
        <label>1</label>
    </ligand>
</feature>
<feature type="binding site" evidence="3">
    <location>
        <position position="209"/>
    </location>
    <ligand>
        <name>Zn(2+)</name>
        <dbReference type="ChEBI" id="CHEBI:29105"/>
        <label>2</label>
    </ligand>
</feature>
<feature type="binding site" evidence="3">
    <location>
        <position position="212"/>
    </location>
    <ligand>
        <name>Zn(2+)</name>
        <dbReference type="ChEBI" id="CHEBI:29105"/>
        <label>2</label>
    </ligand>
</feature>
<feature type="binding site" evidence="3">
    <location>
        <position position="232"/>
    </location>
    <ligand>
        <name>Zn(2+)</name>
        <dbReference type="ChEBI" id="CHEBI:29105"/>
        <label>2</label>
    </ligand>
</feature>
<feature type="binding site" evidence="3">
    <location>
        <position position="237"/>
    </location>
    <ligand>
        <name>Zn(2+)</name>
        <dbReference type="ChEBI" id="CHEBI:29105"/>
        <label>2</label>
    </ligand>
</feature>
<feature type="modified residue" description="N-acetylalanine" evidence="54 55 63 66 67 68 69">
    <location>
        <position position="2"/>
    </location>
</feature>
<feature type="modified residue" description="Phosphoserine" evidence="66 67 70 71">
    <location>
        <position position="19"/>
    </location>
</feature>
<feature type="modified residue" description="Phosphoserine" evidence="70">
    <location>
        <position position="26"/>
    </location>
</feature>
<feature type="modified residue" description="Phosphoserine" evidence="62">
    <location>
        <position position="50"/>
    </location>
</feature>
<feature type="modified residue" description="Phosphoserine" evidence="70">
    <location>
        <position position="138"/>
    </location>
</feature>
<feature type="modified residue" description="N6-acetyllysine" evidence="2">
    <location>
        <position position="266"/>
    </location>
</feature>
<feature type="modified residue" description="N6-acetyllysine; alternate" evidence="64">
    <location>
        <position position="304"/>
    </location>
</feature>
<feature type="modified residue" description="N6-acetyllysine" evidence="64">
    <location>
        <position position="340"/>
    </location>
</feature>
<feature type="modified residue" description="N6-acetyllysine; alternate" evidence="64">
    <location>
        <position position="377"/>
    </location>
</feature>
<feature type="modified residue" description="Phosphoserine" evidence="70">
    <location>
        <position position="417"/>
    </location>
</feature>
<feature type="modified residue" description="Phosphoserine" evidence="2">
    <location>
        <position position="437"/>
    </location>
</feature>
<feature type="modified residue" description="Phosphoserine" evidence="62">
    <location>
        <position position="439"/>
    </location>
</feature>
<feature type="modified residue" description="Phosphoserine" evidence="70">
    <location>
        <position position="453"/>
    </location>
</feature>
<feature type="modified residue" description="Citrulline" evidence="1">
    <location>
        <position position="470"/>
    </location>
</feature>
<feature type="modified residue" description="Phosphoserine" evidence="62">
    <location>
        <position position="471"/>
    </location>
</feature>
<feature type="modified residue" description="Citrulline" evidence="1">
    <location>
        <position position="472"/>
    </location>
</feature>
<feature type="modified residue" description="Phosphoserine" evidence="59 60 62 65 66 67 70">
    <location>
        <position position="473"/>
    </location>
</feature>
<feature type="modified residue" description="Phosphoserine" evidence="67 70">
    <location>
        <position position="479"/>
    </location>
</feature>
<feature type="modified residue" description="Phosphoserine" evidence="62 66 70">
    <location>
        <position position="489"/>
    </location>
</feature>
<feature type="modified residue" description="Phosphothreonine" evidence="70">
    <location>
        <position position="498"/>
    </location>
</feature>
<feature type="modified residue" description="Phosphoserine" evidence="61 65 70 71">
    <location>
        <position position="501"/>
    </location>
</feature>
<feature type="modified residue" description="Phosphothreonine" evidence="59 66 70 71">
    <location>
        <position position="541"/>
    </location>
</feature>
<feature type="modified residue" description="Phosphoserine" evidence="65 71">
    <location>
        <position position="594"/>
    </location>
</feature>
<feature type="modified residue" description="Phosphoserine" evidence="67 71">
    <location>
        <position position="683"/>
    </location>
</feature>
<feature type="modified residue" description="Phosphoserine" evidence="71">
    <location>
        <position position="689"/>
    </location>
</feature>
<feature type="modified residue" description="Phosphoserine" evidence="66">
    <location>
        <position position="697"/>
    </location>
</feature>
<feature type="modified residue" description="Phosphoserine" evidence="62 66 70">
    <location>
        <position position="752"/>
    </location>
</feature>
<feature type="modified residue" description="Phosphotyrosine" evidence="2">
    <location>
        <position position="755"/>
    </location>
</feature>
<feature type="modified residue" description="Phosphoserine" evidence="59 62 66 70">
    <location>
        <position position="757"/>
    </location>
</feature>
<feature type="modified residue" description="N6-acetyllysine; alternate" evidence="64">
    <location>
        <position position="770"/>
    </location>
</feature>
<feature type="modified residue" description="N6-acetyllysine; alternate" evidence="64">
    <location>
        <position position="774"/>
    </location>
</feature>
<feature type="modified residue" description="N6-acetyllysine; alternate" evidence="2">
    <location>
        <position position="779"/>
    </location>
</feature>
<feature type="modified residue" description="Phosphoserine" evidence="70">
    <location>
        <position position="784"/>
    </location>
</feature>
<feature type="modified residue" description="Phosphoserine; by ATM and ATR and dsDNA kinase" evidence="17 20 24 32">
    <location>
        <position position="824"/>
    </location>
</feature>
<feature type="cross-link" description="Glycyl lysine isopeptide (Lys-Gly) (interchain with G-Cter in SUMO2)" evidence="73 75 76">
    <location>
        <position position="31"/>
    </location>
</feature>
<feature type="cross-link" description="Glycyl lysine isopeptide (Lys-Gly) (interchain with G-Cter in SUMO2)" evidence="76">
    <location>
        <position position="127"/>
    </location>
</feature>
<feature type="cross-link" description="Glycyl lysine isopeptide (Lys-Gly) (interchain with G-Cter in SUMO2)" evidence="73 76">
    <location>
        <position position="199"/>
    </location>
</feature>
<feature type="cross-link" description="Glycyl lysine isopeptide (Lys-Gly) (interchain with G-Cter in SUMO2)" evidence="73 76">
    <location>
        <position position="254"/>
    </location>
</feature>
<feature type="cross-link" description="Glycyl lysine isopeptide (Lys-Gly) (interchain with G-Cter in SUMO2)" evidence="73 76">
    <location>
        <position position="261"/>
    </location>
</feature>
<feature type="cross-link" description="Glycyl lysine isopeptide (Lys-Gly) (interchain with G-Cter in SUMO2)" evidence="76">
    <location>
        <position position="272"/>
    </location>
</feature>
<feature type="cross-link" description="Glycyl lysine isopeptide (Lys-Gly) (interchain with G-Cter in SUMO2); alternate" evidence="76">
    <location>
        <position position="304"/>
    </location>
</feature>
<feature type="cross-link" description="Glycyl lysine isopeptide (Lys-Gly) (interchain with G-Cter in SUMO2)" evidence="73 76">
    <location>
        <position position="319"/>
    </location>
</feature>
<feature type="cross-link" description="Glycyl lysine isopeptide (Lys-Gly) (interchain with G-Cter in SUMO2)" evidence="73">
    <location>
        <position position="366"/>
    </location>
</feature>
<feature type="cross-link" description="Glycyl lysine isopeptide (Lys-Gly) (interchain with G-Cter in SUMO1); alternate" evidence="72">
    <location>
        <position position="377"/>
    </location>
</feature>
<feature type="cross-link" description="Glycyl lysine isopeptide (Lys-Gly) (interchain with G-Cter in SUMO2); alternate" evidence="73 74 75 76">
    <location>
        <position position="377"/>
    </location>
</feature>
<feature type="cross-link" description="Glycyl lysine isopeptide (Lys-Gly) (interchain with G-Cter in SUMO2)" evidence="76">
    <location>
        <position position="407"/>
    </location>
</feature>
<feature type="cross-link" description="Glycyl lysine isopeptide (Lys-Gly) (interchain with G-Cter in SUMO2)" evidence="73 76">
    <location>
        <position position="434"/>
    </location>
</feature>
<feature type="cross-link" description="Glycyl lysine isopeptide (Lys-Gly) (interchain with G-Cter in SUMO1); alternate" evidence="72">
    <location>
        <position position="469"/>
    </location>
</feature>
<feature type="cross-link" description="Glycyl lysine isopeptide (Lys-Gly) (interchain with G-Cter in SUMO2); alternate" evidence="73 75 76">
    <location>
        <position position="469"/>
    </location>
</feature>
<feature type="cross-link" description="Glycyl lysine isopeptide (Lys-Gly) (interchain with G-Cter in SUMO2)" evidence="76">
    <location>
        <position position="507"/>
    </location>
</feature>
<feature type="cross-link" description="Glycyl lysine isopeptide (Lys-Gly) (interchain with G-Cter in SUMO); alternate" evidence="19">
    <location>
        <position position="554"/>
    </location>
</feature>
<feature type="cross-link" description="Glycyl lysine isopeptide (Lys-Gly) (interchain with G-Cter in SUMO2); alternate" evidence="76">
    <location>
        <position position="554"/>
    </location>
</feature>
<feature type="cross-link" description="Glycyl lysine isopeptide (Lys-Gly) (interchain with G-Cter in SUMO2)" evidence="73">
    <location>
        <position position="575"/>
    </location>
</feature>
<feature type="cross-link" description="Glycyl lysine isopeptide (Lys-Gly) (interchain with G-Cter in SUMO)" evidence="28">
    <location>
        <position position="676"/>
    </location>
</feature>
<feature type="cross-link" description="Glycyl lysine isopeptide (Lys-Gly) (interchain with G-Cter in SUMO); alternate" evidence="27">
    <location>
        <position position="750"/>
    </location>
</feature>
<feature type="cross-link" description="Glycyl lysine isopeptide (Lys-Gly) (interchain with G-Cter in SUMO1); alternate" evidence="72">
    <location>
        <position position="750"/>
    </location>
</feature>
<feature type="cross-link" description="Glycyl lysine isopeptide (Lys-Gly) (interchain with G-Cter in SUMO2); alternate" evidence="72 73 74 75 76">
    <location>
        <position position="750"/>
    </location>
</feature>
<feature type="cross-link" description="Glycyl lysine isopeptide (Lys-Gly) (interchain with G-Cter in SUMO2); alternate" evidence="73 76">
    <location>
        <position position="770"/>
    </location>
</feature>
<feature type="cross-link" description="Glycyl lysine isopeptide (Lys-Gly) (interchain with G-Cter in SUMO2); alternate" evidence="73 76">
    <location>
        <position position="774"/>
    </location>
</feature>
<feature type="cross-link" description="Glycyl lysine isopeptide (Lys-Gly) (interchain with G-Cter in SUMO1); alternate" evidence="72">
    <location>
        <position position="779"/>
    </location>
</feature>
<feature type="cross-link" description="Glycyl lysine isopeptide (Lys-Gly) (interchain with G-Cter in SUMO2); alternate" evidence="72 73 74 75 76">
    <location>
        <position position="779"/>
    </location>
</feature>
<feature type="cross-link" description="Glycyl lysine isopeptide (Lys-Gly) (interchain with G-Cter in SUMO); alternate" evidence="19">
    <location>
        <position position="804"/>
    </location>
</feature>
<feature type="cross-link" description="Glycyl lysine isopeptide (Lys-Gly) (interchain with G-Cter in SUMO2); alternate" evidence="75 76">
    <location>
        <position position="804"/>
    </location>
</feature>
<feature type="splice variant" id="VSP_010898" description="In isoform 2." evidence="56">
    <location>
        <begin position="114"/>
        <end position="195"/>
    </location>
</feature>
<feature type="sequence variant" id="VAR_042386" description="In dbSNP:rs56229738." evidence="21">
    <original>T</original>
    <variation>M</variation>
    <location>
        <position position="794"/>
    </location>
</feature>
<feature type="mutagenesis site" description="Reduces nuclear localization activity of ZNF268; when associated with A-68." evidence="41">
    <original>C</original>
    <variation>A</variation>
    <location>
        <position position="65"/>
    </location>
</feature>
<feature type="mutagenesis site" description="Reduces nuclear localization activity of ZNF268; when associated with A-65." evidence="41">
    <original>C</original>
    <variation>A</variation>
    <location>
        <position position="68"/>
    </location>
</feature>
<feature type="mutagenesis site" description="Disrupts the interaction with ZNF350 and amost completely relieves the transcription repressive effect of sumoylated TRIM28." evidence="24">
    <original>L</original>
    <variation>P</variation>
    <location>
        <position position="306"/>
    </location>
</feature>
<feature type="mutagenesis site" description="Greatly reduced interaction with PPP1CA." evidence="32">
    <original>K</original>
    <variation>G</variation>
    <location>
        <position position="366"/>
    </location>
</feature>
<feature type="mutagenesis site" description="Increased interaction with PPP1CA. Greatly decreased phosphorylation on S-824." evidence="32">
    <original>I</original>
    <variation>G</variation>
    <location>
        <position position="368"/>
    </location>
</feature>
<feature type="mutagenesis site" description="Some reduction in interaction with PPP1CA." evidence="32">
    <original>F</original>
    <variation>A</variation>
    <location>
        <position position="370"/>
    </location>
</feature>
<feature type="mutagenesis site" description="Some reduction in interaction with PPP1CA." evidence="32">
    <original>F</original>
    <variation>G</variation>
    <location>
        <position position="370"/>
    </location>
</feature>
<feature type="mutagenesis site" description="No effect on interaction with PPP1CA nor on sumoylation levels. Decreased sumoylation levels; when associated with D-501 and D-824." evidence="32">
    <original>S</original>
    <variation>A</variation>
    <location>
        <position position="440"/>
    </location>
</feature>
<feature type="mutagenesis site" description="Abolishes interaction with CBX5; when associated with E-490." evidence="33">
    <original>V</original>
    <variation>E</variation>
    <location>
        <position position="488"/>
    </location>
</feature>
<feature type="mutagenesis site" description="Abolishes interaction with CBX5; when associated with E-488." evidence="33">
    <original>L</original>
    <variation>E</variation>
    <location>
        <position position="490"/>
    </location>
</feature>
<feature type="mutagenesis site" description="No effect on interaction with PPP1CA nor on sumoylation levels. Decreased sumoylation levels; when associated with D-440 and D-824." evidence="32">
    <original>S</original>
    <variation>A</variation>
    <location>
        <position position="501"/>
    </location>
</feature>
<feature type="mutagenesis site" description="Moderately reduces sumoylation and repression. Abolishes both sumoylation and repression; when associated with R-575. Relieves the repressor activity on Dox-induced GADD45A transcription and 2-fold increase in phosphorylation at Ser-824; when associated with R-779 and R-804." evidence="19 24 27">
    <original>K</original>
    <variation>R</variation>
    <location>
        <position position="554"/>
    </location>
</feature>
<feature type="mutagenesis site" description="Modestly reduced sumoylation and repression. Abolishes both sumoylation and repression; when associated with R-554." evidence="19 27">
    <original>K</original>
    <variation>R</variation>
    <location>
        <position position="575"/>
    </location>
</feature>
<feature type="mutagenesis site" description="Complete loss of the PHD finger-mediated stimulatory effect on sumoylation. Loss of binding UBE2I." evidence="27 28">
    <original>C</original>
    <variation>A</variation>
    <location>
        <position position="651"/>
    </location>
</feature>
<feature type="mutagenesis site" description="Greatly reduced sumoylation. Little further effect on sumoylation; when associated with A-668 and/or A-709." evidence="28">
    <original>L</original>
    <variation>A</variation>
    <location>
        <position position="653"/>
    </location>
</feature>
<feature type="mutagenesis site" description="Little effect on sumoylation. Little further effect on sumoylation; when associated with A-653 and/or A-709." evidence="28">
    <original>L</original>
    <variation>A</variation>
    <location>
        <position position="668"/>
    </location>
</feature>
<feature type="mutagenesis site" description="Modestly reduces sumoylation and repression." evidence="19 27">
    <original>K</original>
    <variation>R</variation>
    <location>
        <position position="676"/>
    </location>
</feature>
<feature type="mutagenesis site" description="Greatly reduced sumoylation. Little further effect on sumoylation; when associated with A-653 and/or A-668." evidence="28">
    <original>L</original>
    <variation>A</variation>
    <location>
        <position position="709"/>
    </location>
</feature>
<feature type="mutagenesis site" description="Some reduced sumoylation and repression." evidence="27">
    <original>K</original>
    <variation>R</variation>
    <location>
        <position position="750"/>
    </location>
</feature>
<feature type="mutagenesis site" description="Abolishes both sumoylation and repression; when associated with R-804. Relieves the repressor activity on Dox-induced GADD45A transcription and 2-fold increase in phosphorylation at Ser-824; when associated with R-554 and R-804." evidence="19 24 27">
    <original>K</original>
    <variation>R</variation>
    <location>
        <position position="779"/>
    </location>
</feature>
<feature type="mutagenesis site" description="Abolishes both sumoylation and repression; when associated with R-779. Relieves the repressor activity on Dox-induced GADD45A transcription and 2-fold increase in phosphorylation at Ser-824; when associated with R-554 and R-779." evidence="19 24 27">
    <original>K</original>
    <variation>R</variation>
    <location>
        <position position="804"/>
    </location>
</feature>
<feature type="mutagenesis site" description="Suppresses Dox-induced CDKN1A/p21 promoter activation. No effect on sumoylation levels. Decreased sumoylation levels; when associated with D-440 and D-501." evidence="24 32">
    <original>S</original>
    <variation>A</variation>
    <location>
        <position position="824"/>
    </location>
</feature>
<feature type="mutagenesis site" description="Enhances Dox-induced CDKN1A/p21 promoter activation. Decreased sumoylation with or without Dox-treatment." evidence="24 32">
    <original>S</original>
    <variation>D</variation>
    <location>
        <position position="824"/>
    </location>
</feature>
<feature type="sequence conflict" description="In Ref. 1; AAB37341." evidence="57" ref="1">
    <original>A</original>
    <variation>G</variation>
    <location>
        <position position="162"/>
    </location>
</feature>
<feature type="helix" evidence="81">
    <location>
        <begin position="56"/>
        <end position="60"/>
    </location>
</feature>
<feature type="helix" evidence="81">
    <location>
        <begin position="61"/>
        <end position="63"/>
    </location>
</feature>
<feature type="turn" evidence="81">
    <location>
        <begin position="66"/>
        <end position="68"/>
    </location>
</feature>
<feature type="helix" evidence="81">
    <location>
        <begin position="74"/>
        <end position="76"/>
    </location>
</feature>
<feature type="strand" evidence="81">
    <location>
        <begin position="78"/>
        <end position="80"/>
    </location>
</feature>
<feature type="strand" evidence="81">
    <location>
        <begin position="86"/>
        <end position="88"/>
    </location>
</feature>
<feature type="helix" evidence="81">
    <location>
        <begin position="89"/>
        <end position="91"/>
    </location>
</feature>
<feature type="strand" evidence="80">
    <location>
        <begin position="105"/>
        <end position="107"/>
    </location>
</feature>
<feature type="strand" evidence="80">
    <location>
        <begin position="110"/>
        <end position="113"/>
    </location>
</feature>
<feature type="strand" evidence="81">
    <location>
        <begin position="114"/>
        <end position="116"/>
    </location>
</feature>
<feature type="turn" evidence="81">
    <location>
        <begin position="118"/>
        <end position="120"/>
    </location>
</feature>
<feature type="strand" evidence="81">
    <location>
        <begin position="123"/>
        <end position="125"/>
    </location>
</feature>
<feature type="helix" evidence="81">
    <location>
        <begin position="126"/>
        <end position="128"/>
    </location>
</feature>
<feature type="turn" evidence="81">
    <location>
        <begin position="137"/>
        <end position="140"/>
    </location>
</feature>
<feature type="strand" evidence="79">
    <location>
        <begin position="210"/>
        <end position="212"/>
    </location>
</feature>
<feature type="strand" evidence="79">
    <location>
        <begin position="219"/>
        <end position="221"/>
    </location>
</feature>
<feature type="turn" evidence="79">
    <location>
        <begin position="222"/>
        <end position="225"/>
    </location>
</feature>
<feature type="strand" evidence="79">
    <location>
        <begin position="226"/>
        <end position="228"/>
    </location>
</feature>
<feature type="helix" evidence="79">
    <location>
        <begin position="230"/>
        <end position="234"/>
    </location>
</feature>
<feature type="turn" evidence="79">
    <location>
        <begin position="235"/>
        <end position="239"/>
    </location>
</feature>
<feature type="strand" evidence="79">
    <location>
        <begin position="242"/>
        <end position="244"/>
    </location>
</feature>
<feature type="helix" evidence="81">
    <location>
        <begin position="245"/>
        <end position="354"/>
    </location>
</feature>
<feature type="helix" evidence="81">
    <location>
        <begin position="358"/>
        <end position="377"/>
    </location>
</feature>
<feature type="helix" evidence="81">
    <location>
        <begin position="395"/>
        <end position="403"/>
    </location>
</feature>
<feature type="strand" evidence="81">
    <location>
        <begin position="407"/>
        <end position="411"/>
    </location>
</feature>
<feature type="strand" evidence="77">
    <location>
        <begin position="620"/>
        <end position="626"/>
    </location>
</feature>
<feature type="strand" evidence="77">
    <location>
        <begin position="629"/>
        <end position="631"/>
    </location>
</feature>
<feature type="strand" evidence="77">
    <location>
        <begin position="633"/>
        <end position="635"/>
    </location>
</feature>
<feature type="turn" evidence="78">
    <location>
        <begin position="641"/>
        <end position="643"/>
    </location>
</feature>
<feature type="strand" evidence="77">
    <location>
        <begin position="651"/>
        <end position="653"/>
    </location>
</feature>
<feature type="strand" evidence="77">
    <location>
        <begin position="661"/>
        <end position="663"/>
    </location>
</feature>
<feature type="turn" evidence="78">
    <location>
        <begin position="666"/>
        <end position="669"/>
    </location>
</feature>
<feature type="strand" evidence="78">
    <location>
        <begin position="684"/>
        <end position="690"/>
    </location>
</feature>
<feature type="helix" evidence="78">
    <location>
        <begin position="698"/>
        <end position="713"/>
    </location>
</feature>
<feature type="helix" evidence="78">
    <location>
        <begin position="717"/>
        <end position="721"/>
    </location>
</feature>
<feature type="strand" evidence="78">
    <location>
        <begin position="730"/>
        <end position="732"/>
    </location>
</feature>
<feature type="helix" evidence="78">
    <location>
        <begin position="740"/>
        <end position="748"/>
    </location>
</feature>
<feature type="strand" evidence="78">
    <location>
        <begin position="750"/>
        <end position="753"/>
    </location>
</feature>
<feature type="helix" evidence="78">
    <location>
        <begin position="758"/>
        <end position="775"/>
    </location>
</feature>
<feature type="helix" evidence="78">
    <location>
        <begin position="783"/>
        <end position="799"/>
    </location>
</feature>
<feature type="turn" evidence="78">
    <location>
        <begin position="800"/>
        <end position="802"/>
    </location>
</feature>
<protein>
    <recommendedName>
        <fullName evidence="57">Transcription intermediary factor 1-beta</fullName>
        <shortName>TIF1-beta</shortName>
    </recommendedName>
    <alternativeName>
        <fullName>E3 SUMO-protein ligase TRIM28</fullName>
        <ecNumber>2.3.2.27</ecNumber>
    </alternativeName>
    <alternativeName>
        <fullName>KRAB-associated protein 1</fullName>
        <shortName>KAP-1</shortName>
    </alternativeName>
    <alternativeName>
        <fullName>KRAB-interacting protein 1</fullName>
        <shortName>KRIP-1</shortName>
    </alternativeName>
    <alternativeName>
        <fullName>Nuclear corepressor KAP-1</fullName>
    </alternativeName>
    <alternativeName>
        <fullName>RING finger protein 96</fullName>
    </alternativeName>
    <alternativeName>
        <fullName evidence="57">RING-type E3 ubiquitin transferase TIF1-beta</fullName>
    </alternativeName>
    <alternativeName>
        <fullName>Tripartite motif-containing protein 28</fullName>
    </alternativeName>
</protein>
<evidence type="ECO:0000250" key="1"/>
<evidence type="ECO:0000250" key="2">
    <source>
        <dbReference type="UniProtKB" id="Q62318"/>
    </source>
</evidence>
<evidence type="ECO:0000255" key="3">
    <source>
        <dbReference type="PROSITE-ProRule" id="PRU00024"/>
    </source>
</evidence>
<evidence type="ECO:0000255" key="4">
    <source>
        <dbReference type="PROSITE-ProRule" id="PRU00035"/>
    </source>
</evidence>
<evidence type="ECO:0000255" key="5">
    <source>
        <dbReference type="PROSITE-ProRule" id="PRU00146"/>
    </source>
</evidence>
<evidence type="ECO:0000255" key="6">
    <source>
        <dbReference type="PROSITE-ProRule" id="PRU00175"/>
    </source>
</evidence>
<evidence type="ECO:0000256" key="7">
    <source>
        <dbReference type="SAM" id="MobiDB-lite"/>
    </source>
</evidence>
<evidence type="ECO:0000269" key="8">
    <source>
    </source>
</evidence>
<evidence type="ECO:0000269" key="9">
    <source>
    </source>
</evidence>
<evidence type="ECO:0000269" key="10">
    <source>
    </source>
</evidence>
<evidence type="ECO:0000269" key="11">
    <source>
    </source>
</evidence>
<evidence type="ECO:0000269" key="12">
    <source>
    </source>
</evidence>
<evidence type="ECO:0000269" key="13">
    <source>
    </source>
</evidence>
<evidence type="ECO:0000269" key="14">
    <source>
    </source>
</evidence>
<evidence type="ECO:0000269" key="15">
    <source>
    </source>
</evidence>
<evidence type="ECO:0000269" key="16">
    <source>
    </source>
</evidence>
<evidence type="ECO:0000269" key="17">
    <source>
    </source>
</evidence>
<evidence type="ECO:0000269" key="18">
    <source>
    </source>
</evidence>
<evidence type="ECO:0000269" key="19">
    <source>
    </source>
</evidence>
<evidence type="ECO:0000269" key="20">
    <source>
    </source>
</evidence>
<evidence type="ECO:0000269" key="21">
    <source>
    </source>
</evidence>
<evidence type="ECO:0000269" key="22">
    <source>
    </source>
</evidence>
<evidence type="ECO:0000269" key="23">
    <source>
    </source>
</evidence>
<evidence type="ECO:0000269" key="24">
    <source>
    </source>
</evidence>
<evidence type="ECO:0000269" key="25">
    <source>
    </source>
</evidence>
<evidence type="ECO:0000269" key="26">
    <source>
    </source>
</evidence>
<evidence type="ECO:0000269" key="27">
    <source>
    </source>
</evidence>
<evidence type="ECO:0000269" key="28">
    <source>
    </source>
</evidence>
<evidence type="ECO:0000269" key="29">
    <source>
    </source>
</evidence>
<evidence type="ECO:0000269" key="30">
    <source>
    </source>
</evidence>
<evidence type="ECO:0000269" key="31">
    <source>
    </source>
</evidence>
<evidence type="ECO:0000269" key="32">
    <source>
    </source>
</evidence>
<evidence type="ECO:0000269" key="33">
    <source>
    </source>
</evidence>
<evidence type="ECO:0000269" key="34">
    <source>
    </source>
</evidence>
<evidence type="ECO:0000269" key="35">
    <source>
    </source>
</evidence>
<evidence type="ECO:0000269" key="36">
    <source>
    </source>
</evidence>
<evidence type="ECO:0000269" key="37">
    <source>
    </source>
</evidence>
<evidence type="ECO:0000269" key="38">
    <source>
    </source>
</evidence>
<evidence type="ECO:0000269" key="39">
    <source>
    </source>
</evidence>
<evidence type="ECO:0000269" key="40">
    <source>
    </source>
</evidence>
<evidence type="ECO:0000269" key="41">
    <source>
    </source>
</evidence>
<evidence type="ECO:0000269" key="42">
    <source>
    </source>
</evidence>
<evidence type="ECO:0000269" key="43">
    <source>
    </source>
</evidence>
<evidence type="ECO:0000269" key="44">
    <source>
    </source>
</evidence>
<evidence type="ECO:0000269" key="45">
    <source>
    </source>
</evidence>
<evidence type="ECO:0000269" key="46">
    <source>
    </source>
</evidence>
<evidence type="ECO:0000269" key="47">
    <source>
    </source>
</evidence>
<evidence type="ECO:0000269" key="48">
    <source>
    </source>
</evidence>
<evidence type="ECO:0000269" key="49">
    <source>
    </source>
</evidence>
<evidence type="ECO:0000269" key="50">
    <source>
    </source>
</evidence>
<evidence type="ECO:0000269" key="51">
    <source>
    </source>
</evidence>
<evidence type="ECO:0000269" key="52">
    <source>
    </source>
</evidence>
<evidence type="ECO:0000269" key="53">
    <source>
    </source>
</evidence>
<evidence type="ECO:0000269" key="54">
    <source ref="5"/>
</evidence>
<evidence type="ECO:0000269" key="55">
    <source ref="6"/>
</evidence>
<evidence type="ECO:0000303" key="56">
    <source>
    </source>
</evidence>
<evidence type="ECO:0000305" key="57"/>
<evidence type="ECO:0000312" key="58">
    <source>
        <dbReference type="HGNC" id="HGNC:16384"/>
    </source>
</evidence>
<evidence type="ECO:0007744" key="59">
    <source>
    </source>
</evidence>
<evidence type="ECO:0007744" key="60">
    <source>
    </source>
</evidence>
<evidence type="ECO:0007744" key="61">
    <source>
    </source>
</evidence>
<evidence type="ECO:0007744" key="62">
    <source>
    </source>
</evidence>
<evidence type="ECO:0007744" key="63">
    <source>
    </source>
</evidence>
<evidence type="ECO:0007744" key="64">
    <source>
    </source>
</evidence>
<evidence type="ECO:0007744" key="65">
    <source>
    </source>
</evidence>
<evidence type="ECO:0007744" key="66">
    <source>
    </source>
</evidence>
<evidence type="ECO:0007744" key="67">
    <source>
    </source>
</evidence>
<evidence type="ECO:0007744" key="68">
    <source>
    </source>
</evidence>
<evidence type="ECO:0007744" key="69">
    <source>
    </source>
</evidence>
<evidence type="ECO:0007744" key="70">
    <source>
    </source>
</evidence>
<evidence type="ECO:0007744" key="71">
    <source>
    </source>
</evidence>
<evidence type="ECO:0007744" key="72">
    <source>
    </source>
</evidence>
<evidence type="ECO:0007744" key="73">
    <source>
    </source>
</evidence>
<evidence type="ECO:0007744" key="74">
    <source>
    </source>
</evidence>
<evidence type="ECO:0007744" key="75">
    <source>
    </source>
</evidence>
<evidence type="ECO:0007744" key="76">
    <source>
    </source>
</evidence>
<evidence type="ECO:0007829" key="77">
    <source>
        <dbReference type="PDB" id="1FP0"/>
    </source>
</evidence>
<evidence type="ECO:0007829" key="78">
    <source>
        <dbReference type="PDB" id="2RO1"/>
    </source>
</evidence>
<evidence type="ECO:0007829" key="79">
    <source>
        <dbReference type="PDB" id="2YVR"/>
    </source>
</evidence>
<evidence type="ECO:0007829" key="80">
    <source>
        <dbReference type="PDB" id="6I9H"/>
    </source>
</evidence>
<evidence type="ECO:0007829" key="81">
    <source>
        <dbReference type="PDB" id="7Z36"/>
    </source>
</evidence>
<name>TIF1B_HUMAN</name>
<reference key="1">
    <citation type="journal article" date="1996" name="Genes Dev.">
        <title>KAP-1, a novel corepressor for the highly conserved KRAB repression domain.</title>
        <authorList>
            <person name="Friedman J.R."/>
            <person name="Fredericks W.J."/>
            <person name="Jensen D.E."/>
            <person name="Speicher D.W."/>
            <person name="Huang X.-P."/>
            <person name="Neilson E.G."/>
            <person name="Rauscher F.J. III"/>
        </authorList>
    </citation>
    <scope>NUCLEOTIDE SEQUENCE [MRNA] (ISOFORM 1)</scope>
    <scope>FUNCTION</scope>
</reference>
<reference key="2">
    <citation type="journal article" date="1996" name="Nucleic Acids Res.">
        <title>Transcriptional repression by RING finger protein TIF1 beta that interacts with the KRAB repressor domain of KOX1.</title>
        <authorList>
            <person name="Moosmann P.R."/>
            <person name="Georgiev O."/>
            <person name="le Douarin B."/>
            <person name="Bourquin J.-P."/>
            <person name="Schaffner W."/>
        </authorList>
    </citation>
    <scope>NUCLEOTIDE SEQUENCE [MRNA] (ISOFORM 1)</scope>
    <scope>FUNCTION</scope>
    <scope>SUBCELLULAR LOCATION</scope>
    <scope>TISSUE SPECIFICITY</scope>
    <scope>INTERACTION WITH ZNF10</scope>
</reference>
<reference key="3">
    <citation type="submission" date="1997-03" db="EMBL/GenBank/DDBJ databases">
        <authorList>
            <person name="Emison E.S."/>
            <person name="Lewis B.C."/>
            <person name="Shim H."/>
            <person name="Li Q."/>
            <person name="Dang C.V."/>
            <person name="Lee L.A."/>
        </authorList>
    </citation>
    <scope>NUCLEOTIDE SEQUENCE [MRNA] (ISOFORM 1)</scope>
    <source>
        <tissue>Spleen</tissue>
    </source>
</reference>
<reference key="4">
    <citation type="journal article" date="2004" name="Genome Res.">
        <title>The status, quality, and expansion of the NIH full-length cDNA project: the Mammalian Gene Collection (MGC).</title>
        <authorList>
            <consortium name="The MGC Project Team"/>
        </authorList>
    </citation>
    <scope>NUCLEOTIDE SEQUENCE [LARGE SCALE MRNA] (ISOFORM 2)</scope>
    <source>
        <tissue>Skin</tissue>
        <tissue>Uterus</tissue>
    </source>
</reference>
<reference key="5">
    <citation type="submission" date="2006-05" db="UniProtKB">
        <authorList>
            <person name="Bienvenut W.V."/>
            <person name="Kanor S."/>
            <person name="Tissot J.-D."/>
            <person name="Quadroni M."/>
        </authorList>
    </citation>
    <scope>PROTEIN SEQUENCE OF 2-30</scope>
    <scope>CLEAVAGE OF INITIATOR METHIONINE</scope>
    <scope>ACETYLATION AT ALA-2</scope>
    <scope>IDENTIFICATION BY MASS SPECTROMETRY</scope>
    <source>
        <tissue>T-cell</tissue>
    </source>
</reference>
<reference key="6">
    <citation type="submission" date="2010-01" db="UniProtKB">
        <authorList>
            <person name="Bienvenut W.V."/>
        </authorList>
    </citation>
    <scope>PROTEIN SEQUENCE OF 2-32; 408-427 AND 493-507</scope>
    <scope>CLEAVAGE OF INITIATOR METHIONINE</scope>
    <scope>ACETYLATION AT ALA-2</scope>
    <scope>IDENTIFICATION BY MASS SPECTROMETRY</scope>
    <source>
        <tissue>Ovarian carcinoma</tissue>
    </source>
</reference>
<reference key="7">
    <citation type="submission" date="1995-07" db="EMBL/GenBank/DDBJ databases">
        <authorList>
            <person name="Lyle R."/>
            <person name="Hewitt J.E."/>
        </authorList>
    </citation>
    <scope>NUCLEOTIDE SEQUENCE [MRNA] OF 486-835</scope>
</reference>
<reference key="8">
    <citation type="journal article" date="2007" name="J. Mol. Biol.">
        <title>The structurally disordered KRAB repression domain is incorporated into a protease resistant core upon binding to KAP-1-RBCC domain.</title>
        <authorList>
            <person name="Peng H."/>
            <person name="Gibson L.C."/>
            <person name="Capili A.D."/>
            <person name="Borden K.L."/>
            <person name="Osborne M.J."/>
            <person name="Harper S.L."/>
            <person name="Speicher D.W."/>
            <person name="Zhao K."/>
            <person name="Marmorstein R."/>
            <person name="Rock T.A."/>
            <person name="Rauscher F.J. III"/>
        </authorList>
    </citation>
    <scope>PROTEIN SEQUENCE OF N-TERMINUS</scope>
    <scope>OLIGOMERIZATION</scope>
    <scope>INTERACTION WITH THE KRAB DOMAIN</scope>
    <scope>IDENTIFICATION BY MASS SPECTROMETRY</scope>
</reference>
<reference key="9">
    <citation type="journal article" date="1999" name="Mol. Cell. Biol.">
        <title>KAP-1 corepressor protein interacts and colocalizes with heterochromatic and euchromatic HP1 proteins: a potential role for Kruppel-associated box-zinc finger proteins in heterochromatin-mediated gene silencing.</title>
        <authorList>
            <person name="Ryan R.F."/>
            <person name="Schultz D.C."/>
            <person name="Ayyanathan K."/>
            <person name="Singh P.B."/>
            <person name="Friedman J.R."/>
            <person name="Fredericks W.J."/>
            <person name="Rauscher F.J. III"/>
        </authorList>
    </citation>
    <scope>INTERACTION WITH CBX1; CBX3 AND CBX5</scope>
    <scope>SUBCELLULAR LOCATION</scope>
</reference>
<reference key="10">
    <citation type="journal article" date="1999" name="J. Biol. Chem.">
        <title>Two novel Kruppel-associated box-containing zinc-finger proteins, KRAZ1 and KRAZ2, repress transcription through functional interaction with the corepressor KAP-1 (TIF1beta/KRIP-1).</title>
        <authorList>
            <person name="Agata Y."/>
            <person name="Matsuda E."/>
            <person name="Shimizu A."/>
        </authorList>
    </citation>
    <scope>INTERACTION WITH ZFP53 AND ZFP68</scope>
    <scope>FUNCTION</scope>
</reference>
<reference key="11">
    <citation type="journal article" date="2000" name="J. Biol. Chem.">
        <title>A novel nuclear receptor corepressor complex, N-CoR, contains components of the mammalian SWI/SNF complex and the corepressor KAP-1.</title>
        <authorList>
            <person name="Underhill C."/>
            <person name="Qutob M.S."/>
            <person name="Yee S.P."/>
            <person name="Torchia J."/>
        </authorList>
    </citation>
    <scope>INTERACTION WITH NCOR1</scope>
</reference>
<reference key="12">
    <citation type="journal article" date="2001" name="Genes Dev.">
        <title>Targeting histone deacetylase complexes via KRAB-zinc finger proteins: the PHD and bromodomains of KAP-1 form a cooperative unit that recruits a novel isoform of the Mi-2alpha subunit of NuRD.</title>
        <authorList>
            <person name="Schultz D.C."/>
            <person name="Friedman J.R."/>
            <person name="Rauscher F.J. III"/>
        </authorList>
    </citation>
    <scope>INTERACTION WITH CHD3</scope>
</reference>
<reference key="13">
    <citation type="journal article" date="2002" name="Genes Dev.">
        <title>SETDB1: a novel KAP-1-associated histone H3, lysine 9-specific methyltransferase that contributes to HP1-mediated silencing of euchromatic genes by KRAB zinc-finger proteins.</title>
        <authorList>
            <person name="Schultz D.C."/>
            <person name="Ayyanathan K."/>
            <person name="Negorev D."/>
            <person name="Maul G.G."/>
            <person name="Rauscher F.J. III"/>
        </authorList>
    </citation>
    <scope>INTERACTION WITH SETDB1</scope>
    <scope>FUNCTION</scope>
</reference>
<reference key="14">
    <citation type="journal article" date="2003" name="Nature">
        <title>Proteomic characterization of the human centrosome by protein correlation profiling.</title>
        <authorList>
            <person name="Andersen J.S."/>
            <person name="Wilkinson C.J."/>
            <person name="Mayor T."/>
            <person name="Mortensen P."/>
            <person name="Nigg E.A."/>
            <person name="Mann M."/>
        </authorList>
    </citation>
    <scope>IDENTIFICATION BY MASS SPECTROMETRY</scope>
    <source>
        <tissue>Lymphoblast</tissue>
    </source>
</reference>
<reference key="15">
    <citation type="journal article" date="2005" name="Biochem. Biophys. Res. Commun.">
        <title>The mammalian heterochromatin protein 1 binds diverse nuclear proteins through a common motif that targets the chromoshadow domain.</title>
        <authorList>
            <person name="Lechner M.S."/>
            <person name="Schultz D.C."/>
            <person name="Negorev D."/>
            <person name="Maul G.G."/>
            <person name="Rauscher F.J. III"/>
        </authorList>
    </citation>
    <scope>INTERACTION WITH CBX5</scope>
    <scope>FUNCTION</scope>
</reference>
<reference key="16">
    <citation type="journal article" date="2005" name="EMBO J.">
        <title>MDM2 interaction with nuclear corepressor KAP1 contributes to p53 inactivation.</title>
        <authorList>
            <person name="Wang C."/>
            <person name="Ivanov A."/>
            <person name="Chen L."/>
            <person name="Fredericks W.J."/>
            <person name="Seto E."/>
            <person name="Rauscher F.J. III"/>
            <person name="Chen J."/>
        </authorList>
    </citation>
    <scope>INTERACTION WITH MDM2</scope>
    <scope>FUNCTION</scope>
</reference>
<reference key="17">
    <citation type="journal article" date="2006" name="Biochem. Biophys. Res. Commun.">
        <title>KAP1 dictates p53 response induced by chemotherapeutic agents via Mdm2 interaction.</title>
        <authorList>
            <person name="Okamoto K."/>
            <person name="Kitabayashi I."/>
            <person name="Taya Y."/>
        </authorList>
    </citation>
    <scope>INTERACTION WITH MDM2 IN THE TRIM28/KAP1-MDM2-P53/TP53 COMPLEX</scope>
</reference>
<reference key="18">
    <citation type="journal article" date="2006" name="Biochem. J.">
        <title>The KRAB-associated co-repressor KAP-1 is a coiled-coil binding partner, substrate and activator of the c-Fes protein tyrosine kinase.</title>
        <authorList>
            <person name="Delfino F.J."/>
            <person name="Shaffer J.M."/>
            <person name="Smithgall T.E."/>
        </authorList>
    </citation>
    <scope>INTERACTION WITH FES/FPS</scope>
    <scope>PHOSPHORYLATION</scope>
</reference>
<reference key="19">
    <citation type="journal article" date="2006" name="Cancer Res.">
        <title>KAP1, a novel substrate for PIKK family members, colocalizes with numerous damage response factors at DNA lesions.</title>
        <authorList>
            <person name="White D.E."/>
            <person name="Negorev D."/>
            <person name="Peng H."/>
            <person name="Ivanov A.V."/>
            <person name="Maul G.G."/>
            <person name="Rauscher F.J. III"/>
        </authorList>
    </citation>
    <scope>PHOSPHORYLATION AT SER-824</scope>
    <scope>SUBCELLULAR LOCATION</scope>
    <scope>FUNCTION</scope>
</reference>
<reference key="20">
    <citation type="journal article" date="2006" name="Cell">
        <title>Global, in vivo, and site-specific phosphorylation dynamics in signaling networks.</title>
        <authorList>
            <person name="Olsen J.V."/>
            <person name="Blagoev B."/>
            <person name="Gnad F."/>
            <person name="Macek B."/>
            <person name="Kumar C."/>
            <person name="Mortensen P."/>
            <person name="Mann M."/>
        </authorList>
    </citation>
    <scope>PHOSPHORYLATION [LARGE SCALE ANALYSIS] AT SER-473</scope>
    <scope>IDENTIFICATION BY MASS SPECTROMETRY [LARGE SCALE ANALYSIS]</scope>
    <source>
        <tissue>Cervix carcinoma</tissue>
    </source>
</reference>
<reference key="21">
    <citation type="journal article" date="2006" name="Nat. Biotechnol.">
        <title>A probability-based approach for high-throughput protein phosphorylation analysis and site localization.</title>
        <authorList>
            <person name="Beausoleil S.A."/>
            <person name="Villen J."/>
            <person name="Gerber S.A."/>
            <person name="Rush J."/>
            <person name="Gygi S.P."/>
        </authorList>
    </citation>
    <scope>PHOSPHORYLATION [LARGE SCALE ANALYSIS] AT SER-473; THR-541 AND SER-757</scope>
    <scope>IDENTIFICATION BY MASS SPECTROMETRY [LARGE SCALE ANALYSIS]</scope>
    <source>
        <tissue>Cervix carcinoma</tissue>
    </source>
</reference>
<reference key="22">
    <citation type="journal article" date="2006" name="Nat. Cell Biol.">
        <title>Chromatin relaxation in response to DNA double-strand breaks is modulated by a novel ATM- and KAP-1 dependent pathway.</title>
        <authorList>
            <person name="Ziv Y."/>
            <person name="Bielopolski D."/>
            <person name="Galanty Y."/>
            <person name="Lukas C."/>
            <person name="Taya Y."/>
            <person name="Schultz D.C."/>
            <person name="Lukas J."/>
            <person name="Bekker-Jensen S."/>
            <person name="Bartek J."/>
            <person name="Shiloh Y."/>
        </authorList>
    </citation>
    <scope>PHOSPHORYLATION AT SER-824</scope>
    <scope>FUNCTION</scope>
</reference>
<reference key="23">
    <citation type="journal article" date="2007" name="Cancer Res.">
        <title>MAGE-A, mMage-b, and MAGE-C proteins form complexes with KAP1 and suppress p53-dependent apoptosis in MAGE-positive cell lines.</title>
        <authorList>
            <person name="Yang B."/>
            <person name="O'Herrin S.M."/>
            <person name="Wu J."/>
            <person name="Reagan-Shaw S."/>
            <person name="Ma Y."/>
            <person name="Bhat K.M."/>
            <person name="Gravekamp C."/>
            <person name="Setaluri V."/>
            <person name="Peters N."/>
            <person name="Hoffmann F.M."/>
            <person name="Peng H."/>
            <person name="Ivanov A.V."/>
            <person name="Simpson A.J."/>
            <person name="Longley B.J."/>
        </authorList>
    </citation>
    <scope>INTERACTION WITH MAGEC2</scope>
</reference>
<reference key="24">
    <citation type="journal article" date="2007" name="J. Biol. Chem.">
        <title>Doxorubicin down-regulates Kruppel-associated box domain-associated protein 1 sumoylation that relieves its transcription repression on p21WAF1/CIP1 in breast cancer MCF-7 cells.</title>
        <authorList>
            <person name="Lee Y.K."/>
            <person name="Thomas S.N."/>
            <person name="Yang A.J."/>
            <person name="Ann D.K."/>
        </authorList>
    </citation>
    <scope>INTERACTION WITH ZNF350</scope>
    <scope>SUMOYLATION AT LYS-554; LYS-779 AND LYS-804</scope>
    <scope>FUNCTION</scope>
    <scope>MUTAGENESIS OF LYS-554; LYS-575; LYS-676; LYS-779 AND LYS-804</scope>
</reference>
<reference key="25">
    <citation type="journal article" date="2007" name="J. Biol. Chem.">
        <title>Regulation of E2F1 function by the nuclear corepressor KAP1.</title>
        <authorList>
            <person name="Wang C."/>
            <person name="Rauscher F.J. III"/>
            <person name="Cress W.D."/>
            <person name="Chen J."/>
        </authorList>
    </citation>
    <scope>INTERACTION WITH E2F1</scope>
    <scope>FUNCTION</scope>
</reference>
<reference key="26">
    <citation type="journal article" date="2007" name="J. Biol. Chem.">
        <title>Role for KAP1 serine 824 phosphorylation and sumoylation/desumoylation switch in regulating KAP1-mediated transcriptional repression.</title>
        <authorList>
            <person name="Li X."/>
            <person name="Lee Y.K."/>
            <person name="Jeng J.C."/>
            <person name="Yen Y."/>
            <person name="Schultz D.C."/>
            <person name="Shih H.M."/>
            <person name="Ann D.K."/>
        </authorList>
    </citation>
    <scope>PHOSPHORYLATION AT SER-824</scope>
    <scope>SUMOYLATION</scope>
    <scope>FUNCTION</scope>
    <scope>MUTAGENESIS OF LEU-306; LYS-554; LYS-779; LYS-804 AND SER-824</scope>
</reference>
<reference key="27">
    <citation type="journal article" date="2007" name="J. Proteome Res.">
        <title>Improved titanium dioxide enrichment of phosphopeptides from HeLa cells and high confident phosphopeptide identification by cross-validation of MS/MS and MS/MS/MS spectra.</title>
        <authorList>
            <person name="Yu L.R."/>
            <person name="Zhu Z."/>
            <person name="Chan K.C."/>
            <person name="Issaq H.J."/>
            <person name="Dimitrov D.S."/>
            <person name="Veenstra T.D."/>
        </authorList>
    </citation>
    <scope>IDENTIFICATION BY MASS SPECTROMETRY [LARGE SCALE ANALYSIS]</scope>
    <source>
        <tissue>Cervix carcinoma</tissue>
    </source>
</reference>
<reference key="28">
    <citation type="journal article" date="2007" name="Mol. Cell">
        <title>PHD domain-mediated E3 ligase activity directs intramolecular sumoylation of an adjacent bromodomain required for gene silencing.</title>
        <authorList>
            <person name="Ivanov A.V."/>
            <person name="Peng H."/>
            <person name="Yurchenko V."/>
            <person name="Yap K.L."/>
            <person name="Negorev D.G."/>
            <person name="Schultz D.C."/>
            <person name="Psulkowski E."/>
            <person name="Fredericks W.J."/>
            <person name="White D.E."/>
            <person name="Maul G.G."/>
            <person name="Sadofsky M.J."/>
            <person name="Zhou M.M."/>
            <person name="Rauscher F.J. III"/>
        </authorList>
    </citation>
    <scope>SUMOYLATION AT LYS-750</scope>
    <scope>FUNCTION</scope>
    <scope>DOMAIN PHD-TYPE</scope>
    <scope>INTERACTION WITH CHD3 AND SETDB1</scope>
    <scope>MUTAGENESIS OF LYS-554; LYS-575; CYS-651; LYS-676; LYS-750; LYS-779 AND LYS-804</scope>
</reference>
<reference key="29">
    <citation type="journal article" date="2007" name="Science">
        <title>ATM and ATR substrate analysis reveals extensive protein networks responsive to DNA damage.</title>
        <authorList>
            <person name="Matsuoka S."/>
            <person name="Ballif B.A."/>
            <person name="Smogorzewska A."/>
            <person name="McDonald E.R. III"/>
            <person name="Hurov K.E."/>
            <person name="Luo J."/>
            <person name="Bakalarski C.E."/>
            <person name="Zhao Z."/>
            <person name="Solimini N."/>
            <person name="Lerenthal Y."/>
            <person name="Shiloh Y."/>
            <person name="Gygi S.P."/>
            <person name="Elledge S.J."/>
        </authorList>
    </citation>
    <scope>PHOSPHORYLATION [LARGE SCALE ANALYSIS] AT SER-501</scope>
    <scope>IDENTIFICATION BY MASS SPECTROMETRY [LARGE SCALE ANALYSIS]</scope>
    <source>
        <tissue>Embryonic kidney</tissue>
    </source>
</reference>
<reference key="30">
    <citation type="journal article" date="2008" name="Biochem. Biophys. Res. Commun.">
        <title>A novel GDNF-inducible gene, BMZF3, encodes a transcriptional repressor associated with KAP-1.</title>
        <authorList>
            <person name="Suzuki C."/>
            <person name="Murakumo Y."/>
            <person name="Kawase Y."/>
            <person name="Sato T."/>
            <person name="Morinaga T."/>
            <person name="Fukuda N."/>
            <person name="Enomoto A."/>
            <person name="Ichihara M."/>
            <person name="Takahashi M."/>
        </authorList>
    </citation>
    <scope>INTERACTION WITH ZNF256</scope>
    <scope>FUNCTION</scope>
</reference>
<reference key="31">
    <citation type="journal article" date="2008" name="J. Mol. Biol.">
        <title>The novel protein complex with SMARCAD1/KIAA1122 binds to the vicinity of TSS.</title>
        <authorList>
            <person name="Okazaki N."/>
            <person name="Ikeda S."/>
            <person name="Ohara R."/>
            <person name="Shimada K."/>
            <person name="Yanagawa T."/>
            <person name="Nagase T."/>
            <person name="Ohara O."/>
            <person name="Koga H."/>
        </authorList>
    </citation>
    <scope>INTERACTION WITH SMARCAD1</scope>
</reference>
<reference key="32">
    <citation type="journal article" date="2008" name="J. Proteome Res.">
        <title>Combining protein-based IMAC, peptide-based IMAC, and MudPIT for efficient phosphoproteomic analysis.</title>
        <authorList>
            <person name="Cantin G.T."/>
            <person name="Yi W."/>
            <person name="Lu B."/>
            <person name="Park S.K."/>
            <person name="Xu T."/>
            <person name="Lee J.-D."/>
            <person name="Yates J.R. III"/>
        </authorList>
    </citation>
    <scope>IDENTIFICATION BY MASS SPECTROMETRY [LARGE SCALE ANALYSIS]</scope>
    <source>
        <tissue>Cervix carcinoma</tissue>
    </source>
</reference>
<reference key="33">
    <citation type="journal article" date="2008" name="J. Proteome Res.">
        <title>Phosphorylation analysis of primary human T lymphocytes using sequential IMAC and titanium oxide enrichment.</title>
        <authorList>
            <person name="Carrascal M."/>
            <person name="Ovelleiro D."/>
            <person name="Casas V."/>
            <person name="Gay M."/>
            <person name="Abian J."/>
        </authorList>
    </citation>
    <scope>IDENTIFICATION BY MASS SPECTROMETRY [LARGE SCALE ANALYSIS]</scope>
    <source>
        <tissue>T-cell</tissue>
    </source>
</reference>
<reference key="34">
    <citation type="journal article" date="2008" name="Proc. Natl. Acad. Sci. U.S.A.">
        <title>A quantitative atlas of mitotic phosphorylation.</title>
        <authorList>
            <person name="Dephoure N."/>
            <person name="Zhou C."/>
            <person name="Villen J."/>
            <person name="Beausoleil S.A."/>
            <person name="Bakalarski C.E."/>
            <person name="Elledge S.J."/>
            <person name="Gygi S.P."/>
        </authorList>
    </citation>
    <scope>PHOSPHORYLATION [LARGE SCALE ANALYSIS] AT SER-50; SER-439; SER-471; SER-473; SER-489; SER-752 AND SER-757</scope>
    <scope>IDENTIFICATION BY MASS SPECTROMETRY [LARGE SCALE ANALYSIS]</scope>
    <source>
        <tissue>Cervix carcinoma</tissue>
    </source>
</reference>
<reference key="35">
    <citation type="journal article" date="2009" name="Anal. Chem.">
        <title>Lys-N and trypsin cover complementary parts of the phosphoproteome in a refined SCX-based approach.</title>
        <authorList>
            <person name="Gauci S."/>
            <person name="Helbig A.O."/>
            <person name="Slijper M."/>
            <person name="Krijgsveld J."/>
            <person name="Heck A.J."/>
            <person name="Mohammed S."/>
        </authorList>
    </citation>
    <scope>ACETYLATION [LARGE SCALE ANALYSIS] AT ALA-2</scope>
    <scope>CLEAVAGE OF INITIATOR METHIONINE [LARGE SCALE ANALYSIS]</scope>
    <scope>IDENTIFICATION BY MASS SPECTROMETRY [LARGE SCALE ANALYSIS]</scope>
</reference>
<reference key="36">
    <citation type="journal article" date="2009" name="J. Biol. Chem.">
        <title>The metastasis efficiency modifier ribosomal RNA processing 1 homolog B (RRP1B) is a chromatin-associated factor.</title>
        <authorList>
            <person name="Crawford N.P."/>
            <person name="Yang H."/>
            <person name="Mattaini K.R."/>
            <person name="Hunter K.W."/>
        </authorList>
    </citation>
    <scope>INTERACTION WITH RRP1B</scope>
</reference>
<reference key="37">
    <citation type="journal article" date="2009" name="Sci. Signal.">
        <title>Quantitative phosphoproteomic analysis of T cell receptor signaling reveals system-wide modulation of protein-protein interactions.</title>
        <authorList>
            <person name="Mayya V."/>
            <person name="Lundgren D.H."/>
            <person name="Hwang S.-I."/>
            <person name="Rezaul K."/>
            <person name="Wu L."/>
            <person name="Eng J.K."/>
            <person name="Rodionov V."/>
            <person name="Han D.K."/>
        </authorList>
    </citation>
    <scope>PHOSPHORYLATION [LARGE SCALE ANALYSIS] AT SER-473; SER-501 AND SER-594</scope>
    <scope>IDENTIFICATION BY MASS SPECTROMETRY [LARGE SCALE ANALYSIS]</scope>
    <source>
        <tissue>Leukemic T-cell</tissue>
    </source>
</reference>
<reference key="38">
    <citation type="journal article" date="2009" name="Science">
        <title>Lysine acetylation targets protein complexes and co-regulates major cellular functions.</title>
        <authorList>
            <person name="Choudhary C."/>
            <person name="Kumar C."/>
            <person name="Gnad F."/>
            <person name="Nielsen M.L."/>
            <person name="Rehman M."/>
            <person name="Walther T.C."/>
            <person name="Olsen J.V."/>
            <person name="Mann M."/>
        </authorList>
    </citation>
    <scope>ACETYLATION [LARGE SCALE ANALYSIS] AT LYS-304; LYS-340; LYS-377; LYS-770 AND LYS-774</scope>
    <scope>IDENTIFICATION BY MASS SPECTROMETRY [LARGE SCALE ANALYSIS]</scope>
</reference>
<reference key="39">
    <citation type="journal article" date="2010" name="J. Biol. Chem.">
        <title>In vivo identification of sumoylation sites by a signature tag and cysteine-targeted affinity purification.</title>
        <authorList>
            <person name="Blomster H.A."/>
            <person name="Imanishi S.Y."/>
            <person name="Siimes J."/>
            <person name="Kastu J."/>
            <person name="Morrice N.A."/>
            <person name="Eriksson J.E."/>
            <person name="Sistonen L."/>
        </authorList>
    </citation>
    <scope>SUMOYLATION AT LYS-779</scope>
    <source>
        <tissue>Cervix carcinoma</tissue>
    </source>
</reference>
<reference key="40">
    <citation type="journal article" date="2010" name="Mol. Cancer Res.">
        <title>Interactions of ErbB4 and Kap1 connect the growth factor and DNA damage response pathways.</title>
        <authorList>
            <person name="Gilmore-Hebert M."/>
            <person name="Ramabhadran R."/>
            <person name="Stern D.F."/>
        </authorList>
    </citation>
    <scope>INTERACTION WITH ERBB4 AND MDM2 IN THE TRIM28/KAP1-ERBB4-MDM2 COMPLEX AND WITH MDM2 AND P53/TP53 IN THE TRIM28/KAP1-MDM2-P53/TP53 COMPLEX</scope>
    <scope>FUNCTION</scope>
    <scope>SUBCELLULAR LOCATION</scope>
    <scope>IDENTIFICATION BY MASS SPECTROMETRY</scope>
</reference>
<reference key="41">
    <citation type="journal article" date="2010" name="Mol. Cell">
        <title>MAGE-RING protein complexes comprise a family of E3 ubiquitin ligases.</title>
        <authorList>
            <person name="Doyle J.M."/>
            <person name="Gao J."/>
            <person name="Wang J."/>
            <person name="Yang M."/>
            <person name="Potts P.R."/>
        </authorList>
    </citation>
    <scope>FUNCTION</scope>
    <scope>UBIQUITINATION</scope>
    <scope>INTERACTION WITH MAGEC2</scope>
</reference>
<reference key="42">
    <citation type="journal article" date="2010" name="Nat. Cell Biol.">
        <title>Human POGZ modulates dissociation of HP1alpha from mitotic chromosome arms through Aurora B activation.</title>
        <authorList>
            <person name="Nozawa R.S."/>
            <person name="Nagao K."/>
            <person name="Masuda H.T."/>
            <person name="Iwasaki O."/>
            <person name="Hirota T."/>
            <person name="Nozaki N."/>
            <person name="Kimura H."/>
            <person name="Obuse C."/>
        </authorList>
    </citation>
    <scope>INTERACTION WITH CBX5 AND POGZ</scope>
    <scope>MUTAGENESIS OF VAL-488 AND LEU-490</scope>
</reference>
<reference key="43">
    <citation type="journal article" date="2010" name="Sci. Signal.">
        <title>Quantitative phosphoproteomics reveals widespread full phosphorylation site occupancy during mitosis.</title>
        <authorList>
            <person name="Olsen J.V."/>
            <person name="Vermeulen M."/>
            <person name="Santamaria A."/>
            <person name="Kumar C."/>
            <person name="Miller M.L."/>
            <person name="Jensen L.J."/>
            <person name="Gnad F."/>
            <person name="Cox J."/>
            <person name="Jensen T.S."/>
            <person name="Nigg E.A."/>
            <person name="Brunak S."/>
            <person name="Mann M."/>
        </authorList>
    </citation>
    <scope>ACETYLATION [LARGE SCALE ANALYSIS] AT ALA-2</scope>
    <scope>PHOSPHORYLATION [LARGE SCALE ANALYSIS] AT SER-19; SER-473; SER-489; THR-541; SER-697; SER-752 AND SER-757</scope>
    <scope>CLEAVAGE OF INITIATOR METHIONINE [LARGE SCALE ANALYSIS]</scope>
    <scope>IDENTIFICATION BY MASS SPECTROMETRY [LARGE SCALE ANALYSIS]</scope>
    <source>
        <tissue>Cervix carcinoma</tissue>
    </source>
</reference>
<reference key="44">
    <citation type="journal article" date="2010" name="Sci. Signal.">
        <title>SUMOylation of the transcriptional co-repressor KAP1 is regulated by the serine and threonine phosphatase PP1.</title>
        <authorList>
            <person name="Li X."/>
            <person name="Lin H.H."/>
            <person name="Chen H."/>
            <person name="Xu X."/>
            <person name="Shih H.M."/>
            <person name="Ann D.K."/>
        </authorList>
    </citation>
    <scope>PHOSPHORYLATION AT SER-824</scope>
    <scope>SUMOYLATION</scope>
    <scope>FUNCTION</scope>
    <scope>INTERACTION WITH PPP1CA AND PPP1CB</scope>
    <scope>MUTAGENESIS OF LYS-366; ILE-368; PHE-370; SER-440; SER-501 AND SER-824</scope>
</reference>
<reference key="45">
    <citation type="journal article" date="2011" name="BMC Syst. Biol.">
        <title>Initial characterization of the human central proteome.</title>
        <authorList>
            <person name="Burkard T.R."/>
            <person name="Planyavsky M."/>
            <person name="Kaupe I."/>
            <person name="Breitwieser F.P."/>
            <person name="Buerckstuemmer T."/>
            <person name="Bennett K.L."/>
            <person name="Superti-Furga G."/>
            <person name="Colinge J."/>
        </authorList>
    </citation>
    <scope>IDENTIFICATION BY MASS SPECTROMETRY [LARGE SCALE ANALYSIS]</scope>
</reference>
<reference key="46">
    <citation type="journal article" date="2011" name="J. Immunol.">
        <title>Tripartite motif-containing protein 28 is a small ubiquitin-related modifier E3 ligase and negative regulator of IFN regulatory factor 7.</title>
        <authorList>
            <person name="Liang Q."/>
            <person name="Deng H."/>
            <person name="Li X."/>
            <person name="Wu X."/>
            <person name="Tang Q."/>
            <person name="Chang T.H."/>
            <person name="Peng H."/>
            <person name="Rauscher F.J. III"/>
            <person name="Ozato K."/>
            <person name="Zhu F."/>
        </authorList>
    </citation>
    <scope>FUNCTION AS SUMO LIGASE</scope>
    <scope>INTERACTION WITH IRF7</scope>
</reference>
<reference key="47">
    <citation type="journal article" date="2011" name="Mol. Cell">
        <title>Maintenance of silent chromatin through replication requires SWI/SNF-like chromatin remodeler SMARCAD1.</title>
        <authorList>
            <person name="Rowbotham S.P."/>
            <person name="Barki L."/>
            <person name="Neves-Costa A."/>
            <person name="Santos F."/>
            <person name="Dean W."/>
            <person name="Hawkes N."/>
            <person name="Choudhary P."/>
            <person name="Will W.R."/>
            <person name="Webster J."/>
            <person name="Oxley D."/>
            <person name="Green C.M."/>
            <person name="Varga-Weisz P."/>
            <person name="Mermoud J.E."/>
        </authorList>
    </citation>
    <scope>IDENTIFICATION IN A COMPLEX WITH EHMT2; HDAC1 AND HDAC2</scope>
</reference>
<reference key="48">
    <citation type="journal article" date="2011" name="Sci. Signal.">
        <title>System-wide temporal characterization of the proteome and phosphoproteome of human embryonic stem cell differentiation.</title>
        <authorList>
            <person name="Rigbolt K.T."/>
            <person name="Prokhorova T.A."/>
            <person name="Akimov V."/>
            <person name="Henningsen J."/>
            <person name="Johansen P.T."/>
            <person name="Kratchmarova I."/>
            <person name="Kassem M."/>
            <person name="Mann M."/>
            <person name="Olsen J.V."/>
            <person name="Blagoev B."/>
        </authorList>
    </citation>
    <scope>ACETYLATION [LARGE SCALE ANALYSIS] AT ALA-2</scope>
    <scope>PHOSPHORYLATION [LARGE SCALE ANALYSIS] AT SER-19; SER-473; SER-479 AND SER-683</scope>
    <scope>CLEAVAGE OF INITIATOR METHIONINE [LARGE SCALE ANALYSIS]</scope>
    <scope>IDENTIFICATION BY MASS SPECTROMETRY [LARGE SCALE ANALYSIS]</scope>
</reference>
<reference key="49">
    <citation type="journal article" date="2012" name="Mol. Cell. Proteomics">
        <title>Comparative large-scale characterisation of plant vs. mammal proteins reveals similar and idiosyncratic N-alpha acetylation features.</title>
        <authorList>
            <person name="Bienvenut W.V."/>
            <person name="Sumpton D."/>
            <person name="Martinez A."/>
            <person name="Lilla S."/>
            <person name="Espagne C."/>
            <person name="Meinnel T."/>
            <person name="Giglione C."/>
        </authorList>
    </citation>
    <scope>ACETYLATION [LARGE SCALE ANALYSIS] AT ALA-2</scope>
    <scope>CLEAVAGE OF INITIATOR METHIONINE [LARGE SCALE ANALYSIS]</scope>
    <scope>IDENTIFICATION BY MASS SPECTROMETRY [LARGE SCALE ANALYSIS]</scope>
</reference>
<reference key="50">
    <citation type="journal article" date="2012" name="Nucleic Acids Res.">
        <title>SPOC1 modulates DNA repair by regulating key determinants of chromatin compaction and DNA damage response.</title>
        <authorList>
            <person name="Mund A."/>
            <person name="Schubert T."/>
            <person name="Staege H."/>
            <person name="Kinkley S."/>
            <person name="Reumann K."/>
            <person name="Kriegs M."/>
            <person name="Fritsch L."/>
            <person name="Battisti V."/>
            <person name="Ait-Si-Ali S."/>
            <person name="Hoffbeck A.S."/>
            <person name="Soutoglou E."/>
            <person name="Will H."/>
        </authorList>
    </citation>
    <scope>FUNCTION</scope>
    <scope>SUBCELLULAR LOCATION</scope>
    <scope>INTERACTION WITH PHF13</scope>
</reference>
<reference key="51">
    <citation type="journal article" date="2020" name="Nucleic Acids Res.">
        <title>SPOC1 modulates DNA repair by regulating key determinants of chromatin compaction and DNA damage response.</title>
        <authorList>
            <person name="Mund A."/>
            <person name="Schubert T."/>
            <person name="Staege H."/>
            <person name="Kinkley S."/>
            <person name="Reumann K."/>
            <person name="Kriegs M."/>
            <person name="Fritsch L."/>
            <person name="Battisti V."/>
            <person name="Ait-Si-Ali S."/>
            <person name="Hoffbeck A.S."/>
            <person name="Soutoglou E."/>
            <person name="Will H."/>
        </authorList>
    </citation>
    <scope>ERRATUM OF PUBMED:23034801</scope>
</reference>
<reference key="52">
    <citation type="journal article" date="2012" name="Proc. Natl. Acad. Sci. U.S.A.">
        <title>N-terminal acetylome analyses and functional insights of the N-terminal acetyltransferase NatB.</title>
        <authorList>
            <person name="Van Damme P."/>
            <person name="Lasa M."/>
            <person name="Polevoda B."/>
            <person name="Gazquez C."/>
            <person name="Elosegui-Artola A."/>
            <person name="Kim D.S."/>
            <person name="De Juan-Pardo E."/>
            <person name="Demeyer K."/>
            <person name="Hole K."/>
            <person name="Larrea E."/>
            <person name="Timmerman E."/>
            <person name="Prieto J."/>
            <person name="Arnesen T."/>
            <person name="Sherman F."/>
            <person name="Gevaert K."/>
            <person name="Aldabe R."/>
        </authorList>
    </citation>
    <scope>ACETYLATION [LARGE SCALE ANALYSIS] AT ALA-2</scope>
    <scope>CLEAVAGE OF INITIATOR METHIONINE [LARGE SCALE ANALYSIS]</scope>
    <scope>IDENTIFICATION BY MASS SPECTROMETRY [LARGE SCALE ANALYSIS]</scope>
</reference>
<reference key="53">
    <citation type="journal article" date="2013" name="Cell. Mol. Life Sci.">
        <title>Novel activity of KRAB domain that functions to reinforce nuclear localization of KRAB-containing zinc finger proteins by interacting with KAP1.</title>
        <authorList>
            <person name="Wang W."/>
            <person name="Cai J."/>
            <person name="Wu Y."/>
            <person name="Hu L."/>
            <person name="Chen Z."/>
            <person name="Hu J."/>
            <person name="Chen Z."/>
            <person name="Li W."/>
            <person name="Guo M."/>
            <person name="Huang Z."/>
        </authorList>
    </citation>
    <scope>FUNCTION</scope>
    <scope>INTERACTION WITH ZNF268; KOX1 AND ZNF300</scope>
    <scope>SUBCELLULAR LOCATION</scope>
    <scope>MUTAGENESIS OF CYS-65 AND CYS-68</scope>
</reference>
<reference key="54">
    <citation type="journal article" date="2013" name="J. Immunol.">
        <title>Cutting Edge: a novel, human-specific interacting protein couples FOXP3 to a chromatin-remodeling complex that contains KAP1/TRIM28.</title>
        <authorList>
            <person name="Huang C."/>
            <person name="Martin S."/>
            <person name="Pfleger C."/>
            <person name="Du J."/>
            <person name="Buckner J.H."/>
            <person name="Bluestone J.A."/>
            <person name="Riley J.L."/>
            <person name="Ziegler S.F."/>
        </authorList>
    </citation>
    <scope>FUNCTION</scope>
    <scope>INTERACTION WITH ZFP90</scope>
</reference>
<reference key="55">
    <citation type="journal article" date="2013" name="J. Proteome Res.">
        <title>Toward a comprehensive characterization of a human cancer cell phosphoproteome.</title>
        <authorList>
            <person name="Zhou H."/>
            <person name="Di Palma S."/>
            <person name="Preisinger C."/>
            <person name="Peng M."/>
            <person name="Polat A.N."/>
            <person name="Heck A.J."/>
            <person name="Mohammed S."/>
        </authorList>
    </citation>
    <scope>PHOSPHORYLATION [LARGE SCALE ANALYSIS] AT SER-19; SER-26; SER-138; SER-417; SER-453; SER-473; SER-479; SER-489; THR-498; SER-501; THR-541; SER-752; SER-757 AND SER-784</scope>
    <scope>IDENTIFICATION BY MASS SPECTROMETRY [LARGE SCALE ANALYSIS]</scope>
    <source>
        <tissue>Cervix carcinoma</tissue>
        <tissue>Erythroleukemia</tissue>
    </source>
</reference>
<reference key="56">
    <citation type="journal article" date="2013" name="Mol. Cell. Biol.">
        <title>Senataxin, defective in the neurodegenerative disorder ataxia with oculomotor apraxia 2, lies at the interface of transcription and the DNA damage response.</title>
        <authorList>
            <person name="Yuce O."/>
            <person name="West S.C."/>
        </authorList>
    </citation>
    <scope>INTERACTION WITH SETX</scope>
</reference>
<reference key="57">
    <citation type="journal article" date="2014" name="Elife">
        <title>A KRAS-directed transcriptional silencing pathway that mediates the CpG island methylator phenotype.</title>
        <authorList>
            <person name="Serra R.W."/>
            <person name="Fang M."/>
            <person name="Park S.M."/>
            <person name="Hutchinson L."/>
            <person name="Green M.R."/>
        </authorList>
    </citation>
    <scope>FUNCTION</scope>
    <scope>POSSIBLE IDENTIFICATION IN A COREPRESSOR COMPLEX</scope>
    <scope>CHROMATIN-BINDING</scope>
</reference>
<reference key="58">
    <citation type="journal article" date="2014" name="J. Proteomics">
        <title>An enzyme assisted RP-RPLC approach for in-depth analysis of human liver phosphoproteome.</title>
        <authorList>
            <person name="Bian Y."/>
            <person name="Song C."/>
            <person name="Cheng K."/>
            <person name="Dong M."/>
            <person name="Wang F."/>
            <person name="Huang J."/>
            <person name="Sun D."/>
            <person name="Wang L."/>
            <person name="Ye M."/>
            <person name="Zou H."/>
        </authorList>
    </citation>
    <scope>PHOSPHORYLATION [LARGE SCALE ANALYSIS] AT SER-19; SER-501; THR-541; SER-594; SER-683 AND SER-689</scope>
    <scope>IDENTIFICATION BY MASS SPECTROMETRY [LARGE SCALE ANALYSIS]</scope>
    <source>
        <tissue>Liver</tissue>
    </source>
</reference>
<reference key="59">
    <citation type="journal article" date="2014" name="J. Virol.">
        <title>Kaposi's sarcoma-associated herpesvirus-encoded LANA interacts with host KAP1 to facilitate establishment of viral latency.</title>
        <authorList>
            <person name="Sun R."/>
            <person name="Liang D."/>
            <person name="Gao Y."/>
            <person name="Lan K."/>
        </authorList>
    </citation>
    <scope>INTERACTION WITH HERPES VIRUS 8 PROTEIN LANA1 (MICROBIAL INFECTION)</scope>
    <scope>FUNCTION (MICROBIAL INFECTION)</scope>
    <scope>SUBCELLULAR LOCATION</scope>
</reference>
<reference key="60">
    <citation type="journal article" date="2014" name="Mol. Cell">
        <title>Transcriptional repressor ZBTB1 promotes chromatin remodeling and translesion DNA synthesis.</title>
        <authorList>
            <person name="Kim H."/>
            <person name="Dejsuphong D."/>
            <person name="Adelmant G."/>
            <person name="Ceccaldi R."/>
            <person name="Yang K."/>
            <person name="Marto J.A."/>
            <person name="D'Andrea A.D."/>
        </authorList>
    </citation>
    <scope>INTERACTION WITH ZBTB1</scope>
</reference>
<reference key="61">
    <citation type="journal article" date="2014" name="Nat. Struct. Mol. Biol.">
        <title>Uncovering global SUMOylation signaling networks in a site-specific manner.</title>
        <authorList>
            <person name="Hendriks I.A."/>
            <person name="D'Souza R.C."/>
            <person name="Yang B."/>
            <person name="Verlaan-de Vries M."/>
            <person name="Mann M."/>
            <person name="Vertegaal A.C."/>
        </authorList>
    </citation>
    <scope>SUMOYLATION [LARGE SCALE ANALYSIS] AT LYS-31; LYS-199; LYS-254; LYS-261; LYS-319; LYS-366; LYS-377; LYS-434; LYS-469; LYS-575; LYS-750; LYS-770; LYS-774 AND LYS-779</scope>
    <scope>IDENTIFICATION BY MASS SPECTROMETRY [LARGE SCALE ANALYSIS]</scope>
</reference>
<reference key="62">
    <citation type="journal article" date="2014" name="Proc. Natl. Acad. Sci. U.S.A.">
        <title>Mapping of SUMO sites and analysis of SUMOylation changes induced by external stimuli.</title>
        <authorList>
            <person name="Impens F."/>
            <person name="Radoshevich L."/>
            <person name="Cossart P."/>
            <person name="Ribet D."/>
        </authorList>
    </citation>
    <scope>SUMOYLATION [LARGE SCALE ANALYSIS] AT LYS-377; LYS-469; LYS-750 AND LYS-779</scope>
    <scope>IDENTIFICATION BY MASS SPECTROMETRY [LARGE SCALE ANALYSIS]</scope>
</reference>
<reference key="63">
    <citation type="journal article" date="2015" name="Cell Rep.">
        <title>SUMO-2 orchestrates chromatin modifiers in response to DNA damage.</title>
        <authorList>
            <person name="Hendriks I.A."/>
            <person name="Treffers L.W."/>
            <person name="Verlaan-de Vries M."/>
            <person name="Olsen J.V."/>
            <person name="Vertegaal A.C."/>
        </authorList>
    </citation>
    <scope>SUMOYLATION [LARGE SCALE ANALYSIS] AT LYS-31; LYS-377; LYS-469; LYS-750; LYS-779 AND LYS-804</scope>
    <scope>IDENTIFICATION BY MASS SPECTROMETRY [LARGE SCALE ANALYSIS]</scope>
</reference>
<reference key="64">
    <citation type="journal article" date="2015" name="Genes Dev.">
        <title>Screen identifies bromodomain protein ZMYND8 in chromatin recognition of transcription-associated DNA damage that promotes homologous recombination.</title>
        <authorList>
            <person name="Gong F."/>
            <person name="Chiu L.Y."/>
            <person name="Cox B."/>
            <person name="Aymard F."/>
            <person name="Clouaire T."/>
            <person name="Leung J.W."/>
            <person name="Cammarata M."/>
            <person name="Perez M."/>
            <person name="Agarwal P."/>
            <person name="Brodbelt J.S."/>
            <person name="Legube G."/>
            <person name="Miller K.M."/>
        </authorList>
    </citation>
    <scope>SUBCELLULAR LOCATION</scope>
</reference>
<reference key="65">
    <citation type="journal article" date="2015" name="Mol. Cell. Proteomics">
        <title>System-wide analysis of SUMOylation dynamics in response to replication stress reveals novel small ubiquitin-like modified target proteins and acceptor lysines relevant for genome stability.</title>
        <authorList>
            <person name="Xiao Z."/>
            <person name="Chang J.G."/>
            <person name="Hendriks I.A."/>
            <person name="Sigurdsson J.O."/>
            <person name="Olsen J.V."/>
            <person name="Vertegaal A.C."/>
        </authorList>
    </citation>
    <scope>SUMOYLATION [LARGE SCALE ANALYSIS] AT LYS-377; LYS-750 AND LYS-779</scope>
    <scope>IDENTIFICATION BY MASS SPECTROMETRY [LARGE SCALE ANALYSIS]</scope>
</reference>
<reference key="66">
    <citation type="journal article" date="2016" name="Epigenetics">
        <title>ATRX binds to atypical chromatin domains at the 3' exons of zinc finger genes to preserve H3K9me3 enrichment.</title>
        <authorList>
            <person name="Valle-Garcia D."/>
            <person name="Qadeer Z.A."/>
            <person name="McHugh D.S."/>
            <person name="Ghiraldini F.G."/>
            <person name="Chowdhury A.H."/>
            <person name="Hasson D."/>
            <person name="Dyer M.A."/>
            <person name="Recillas-Targa F."/>
            <person name="Bernstein E."/>
        </authorList>
    </citation>
    <scope>FUNCTION</scope>
    <scope>INTERACTION WITH ATRX</scope>
    <scope>FORMATION OF A COMPLEX WITH ATRX; SETDB1 AND ZNF274</scope>
</reference>
<reference key="67">
    <citation type="journal article" date="2017" name="Nat. Struct. Mol. Biol.">
        <title>Site-specific mapping of the human SUMO proteome reveals co-modification with phosphorylation.</title>
        <authorList>
            <person name="Hendriks I.A."/>
            <person name="Lyon D."/>
            <person name="Young C."/>
            <person name="Jensen L.J."/>
            <person name="Vertegaal A.C."/>
            <person name="Nielsen M.L."/>
        </authorList>
    </citation>
    <scope>SUMOYLATION [LARGE SCALE ANALYSIS] AT LYS-31; LYS-127; LYS-199; LYS-254; LYS-261; LYS-272; LYS-304; LYS-319; LYS-377; LYS-407; LYS-434; LYS-469; LYS-507; LYS-554; LYS-750; LYS-770; LYS-774; LYS-779 AND LYS-804</scope>
    <scope>IDENTIFICATION BY MASS SPECTROMETRY [LARGE SCALE ANALYSIS]</scope>
</reference>
<reference key="68">
    <citation type="journal article" date="2019" name="BMC Mol. Cell Biol.">
        <title>DUF3669, a 'domain of unknown function' within ZNF746 and ZNF777, oligomerizes and contributes to transcriptional repression.</title>
        <authorList>
            <person name="Al Chiblak M."/>
            <person name="Steinbeck F."/>
            <person name="Thiesen H.J."/>
            <person name="Lorenz P."/>
        </authorList>
    </citation>
    <scope>INTERACTION WITH ZNF746</scope>
</reference>
<reference key="69">
    <citation type="journal article" date="2019" name="Cell Death Differ.">
        <title>TRIM17 and TRIM28 antagonistically regulate the ubiquitination and anti-apoptotic activity of BCL2A1.</title>
        <authorList>
            <person name="Lionnard L."/>
            <person name="Duc P."/>
            <person name="Brennan M.S."/>
            <person name="Kueh A.J."/>
            <person name="Pal M."/>
            <person name="Guardia F."/>
            <person name="Mojsa B."/>
            <person name="Damiano M.A."/>
            <person name="Mora S."/>
            <person name="Lassot I."/>
            <person name="Ravichandran R."/>
            <person name="Cochet C."/>
            <person name="Aouacheria A."/>
            <person name="Potts P.R."/>
            <person name="Herold M.J."/>
            <person name="Desagher S."/>
            <person name="Kucharczak J."/>
        </authorList>
    </citation>
    <scope>INTERACTION WITH TRIM17</scope>
</reference>
<reference key="70">
    <citation type="journal article" date="2020" name="Oncogene">
        <title>The EGFR-ZNF263 signaling axis silences SIX3 in glioblastoma epigenetically.</title>
        <authorList>
            <person name="Yu Z."/>
            <person name="Feng J."/>
            <person name="Wang W."/>
            <person name="Deng Z."/>
            <person name="Zhang Y."/>
            <person name="Xiao L."/>
            <person name="Wang Z."/>
            <person name="Liu C."/>
            <person name="Liu Q."/>
            <person name="Chen S."/>
            <person name="Wu M."/>
        </authorList>
    </citation>
    <scope>INTERACTION WITH ZNF263</scope>
</reference>
<reference key="71">
    <citation type="journal article" date="2020" name="Sci. Rep.">
        <title>ZNF354C is a transcriptional repressor that inhibits endothelial angiogenic sprouting.</title>
        <authorList>
            <person name="Oo J.A."/>
            <person name="Irmer B."/>
            <person name="Guenther S."/>
            <person name="Warwick T."/>
            <person name="Palfi K."/>
            <person name="Izquierdo Ponce J."/>
            <person name="Teichmann T."/>
            <person name="Pflueger-Mueller B."/>
            <person name="Gilsbach R."/>
            <person name="Brandes R.P."/>
            <person name="Leisegang M.S."/>
        </authorList>
    </citation>
    <scope>INTERACTION WITH ZNF354C</scope>
</reference>
<reference key="72">
    <citation type="journal article" date="2023" name="Nucleic Acids Res.">
        <title>ZNF432 stimulates PARylation and inhibits DNA resection to balance PARPi sensitivity and resistance.</title>
        <authorList>
            <person name="O'Sullivan J."/>
            <person name="Kothari C."/>
            <person name="Caron M.C."/>
            <person name="Gagne J.P."/>
            <person name="Jin Z."/>
            <person name="Nonfoux L."/>
            <person name="Beneyton A."/>
            <person name="Coulombe Y."/>
            <person name="Thomas M."/>
            <person name="Atalay N."/>
            <person name="Meng X.W."/>
            <person name="Milano L."/>
            <person name="Jean D."/>
            <person name="Boisvert F.M."/>
            <person name="Kaufmann S.H."/>
            <person name="Hendzel M.J."/>
            <person name="Masson J.Y."/>
            <person name="Poirier G.G."/>
        </authorList>
    </citation>
    <scope>INTERACTION WITH ZNF432</scope>
</reference>
<reference key="73">
    <citation type="journal article" date="2001" name="EMBO J.">
        <title>Solution structure of the PHD domain from the KAP-1 corepressor: structural determinants for PHD, RING and LIM zinc-binding domains.</title>
        <authorList>
            <person name="Capili A.D."/>
            <person name="Schultz D.C."/>
            <person name="Rauscher F.J. III"/>
            <person name="Borden K.L."/>
        </authorList>
    </citation>
    <scope>STRUCTURE BY NMR OF 619-688 IN COMPLEX WITH ZINC IONS</scope>
</reference>
<reference key="74">
    <citation type="journal article" date="2008" name="Nat. Struct. Mol. Biol.">
        <title>Structural insights into human KAP1 PHD finger-bromodomain and its role in gene silencing.</title>
        <authorList>
            <person name="Zeng L."/>
            <person name="Yap K.L."/>
            <person name="Ivanov A.V."/>
            <person name="Wang X."/>
            <person name="Mujtaba S."/>
            <person name="Plotnikova O."/>
            <person name="Rauscher F.J. III"/>
            <person name="Zhou M.M."/>
        </authorList>
    </citation>
    <scope>STRUCTURE BY NMR OF 624-812 OF WILD TYPE AND IN COMPLEX WITH UBE2I</scope>
    <scope>SUMOYLATION AT LYS-676; LYS-750; LYS-779 AND LYS-804</scope>
    <scope>MUTAGENESIS OF CYS-651; LEU-653; LEU-668 AND LEU-709</scope>
</reference>
<reference key="75">
    <citation type="submission" date="2009-02" db="PDB data bank">
        <title>Crystal structure of ms1043.</title>
        <authorList>
            <consortium name="RIKEN structural genomics initiative (RSGI)"/>
        </authorList>
    </citation>
    <scope>X-RAY CRYSTALLOGRAPHY (1.8 ANGSTROMS) OF 201-250</scope>
</reference>
<reference key="76">
    <citation type="journal article" date="2007" name="Nature">
        <title>Patterns of somatic mutation in human cancer genomes.</title>
        <authorList>
            <person name="Greenman C."/>
            <person name="Stephens P."/>
            <person name="Smith R."/>
            <person name="Dalgliesh G.L."/>
            <person name="Hunter C."/>
            <person name="Bignell G."/>
            <person name="Davies H."/>
            <person name="Teague J."/>
            <person name="Butler A."/>
            <person name="Stevens C."/>
            <person name="Edkins S."/>
            <person name="O'Meara S."/>
            <person name="Vastrik I."/>
            <person name="Schmidt E.E."/>
            <person name="Avis T."/>
            <person name="Barthorpe S."/>
            <person name="Bhamra G."/>
            <person name="Buck G."/>
            <person name="Choudhury B."/>
            <person name="Clements J."/>
            <person name="Cole J."/>
            <person name="Dicks E."/>
            <person name="Forbes S."/>
            <person name="Gray K."/>
            <person name="Halliday K."/>
            <person name="Harrison R."/>
            <person name="Hills K."/>
            <person name="Hinton J."/>
            <person name="Jenkinson A."/>
            <person name="Jones D."/>
            <person name="Menzies A."/>
            <person name="Mironenko T."/>
            <person name="Perry J."/>
            <person name="Raine K."/>
            <person name="Richardson D."/>
            <person name="Shepherd R."/>
            <person name="Small A."/>
            <person name="Tofts C."/>
            <person name="Varian J."/>
            <person name="Webb T."/>
            <person name="West S."/>
            <person name="Widaa S."/>
            <person name="Yates A."/>
            <person name="Cahill D.P."/>
            <person name="Louis D.N."/>
            <person name="Goldstraw P."/>
            <person name="Nicholson A.G."/>
            <person name="Brasseur F."/>
            <person name="Looijenga L."/>
            <person name="Weber B.L."/>
            <person name="Chiew Y.-E."/>
            <person name="DeFazio A."/>
            <person name="Greaves M.F."/>
            <person name="Green A.R."/>
            <person name="Campbell P."/>
            <person name="Birney E."/>
            <person name="Easton D.F."/>
            <person name="Chenevix-Trench G."/>
            <person name="Tan M.-H."/>
            <person name="Khoo S.K."/>
            <person name="Teh B.T."/>
            <person name="Yuen S.T."/>
            <person name="Leung S.Y."/>
            <person name="Wooster R."/>
            <person name="Futreal P.A."/>
            <person name="Stratton M.R."/>
        </authorList>
    </citation>
    <scope>VARIANT [LARGE SCALE ANALYSIS] MET-794</scope>
</reference>
<proteinExistence type="evidence at protein level"/>
<keyword id="KW-0002">3D-structure</keyword>
<keyword id="KW-0007">Acetylation</keyword>
<keyword id="KW-0013">ADP-ribosylation</keyword>
<keyword id="KW-0025">Alternative splicing</keyword>
<keyword id="KW-0103">Bromodomain</keyword>
<keyword id="KW-0156">Chromatin regulator</keyword>
<keyword id="KW-0164">Citrullination</keyword>
<keyword id="KW-0175">Coiled coil</keyword>
<keyword id="KW-0903">Direct protein sequencing</keyword>
<keyword id="KW-0945">Host-virus interaction</keyword>
<keyword id="KW-1017">Isopeptide bond</keyword>
<keyword id="KW-0479">Metal-binding</keyword>
<keyword id="KW-0539">Nucleus</keyword>
<keyword id="KW-0597">Phosphoprotein</keyword>
<keyword id="KW-1267">Proteomics identification</keyword>
<keyword id="KW-1185">Reference proteome</keyword>
<keyword id="KW-0677">Repeat</keyword>
<keyword id="KW-0678">Repressor</keyword>
<keyword id="KW-0804">Transcription</keyword>
<keyword id="KW-0805">Transcription regulation</keyword>
<keyword id="KW-0808">Transferase</keyword>
<keyword id="KW-0832">Ubl conjugation</keyword>
<keyword id="KW-0833">Ubl conjugation pathway</keyword>
<keyword id="KW-0862">Zinc</keyword>
<keyword id="KW-0863">Zinc-finger</keyword>
<sequence>MAASAAAASAAAASAASGSPGPGEGSAGGEKRSTAPSAAASASASAAASSPAGGGAEALELLEHCGVCRERLRPEREPRLLPCLHSACSACLGPAAPAAANSSGDGGAAGDGTVVDCPVCKQQCFSKDIVENYFMRDSGSKAATDAQDANQCCTSCEDNAPATSYCVECSEPLCETCVEAHQRVKYTKDHTVRSTGPAKSRDGERTVYCNVHKHEPLVLFCESCDTLTCRDCQLNAHKDHQYQFLEDAVRNQRKLLASLVKRLGDKHATLQKSTKEVRSSIRQVSDVQKRVQVDVKMAILQIMKELNKRGRVLVNDAQKVTEGQQERLERQHWTMTKIQKHQEHILRFASWALESDNNTALLLSKKLIYFQLHRALKMIVDPVEPHGEMKFQWDLNAWTKSAEAFGKIVAERPGTNSTGPAPMAPPRAPGPLSKQGSGSSQPMEVQEGYGFGSGDDPYSSAEPHVSGVKRSRSGEGEVSGLMRKVPRVSLERLDLDLTADSQPPVFKVFPGSTTEDYNLIVIERGAAAAATGQPGTAPAGTPGAPPLAGMAIVKEEETEAAIGAPPTATEGPETKPVLMALAEGPGAEGPRLASPSGSTSSGLEVVAPEGTSAPGGGPGTLDDSATICRVCQKPGDLVMCNQCEFCFHLDCHLPALQDVPGEEWSCSLCHVLPDLKEEDGSLSLDGADSTGVVAKLSPANQRKCERVLLALFCHEPCRPLHQLATDSTFSLDQPGGTLDLTLIRARLQEKLSPPYSSPQEFAQDVGRMFKQFNKLTEDKADVQSIIGLQRFFETRMNEAFGDTKFSAVLVEPPPMSLPGAGLSSQELSGGPGDGP</sequence>
<dbReference type="EC" id="2.3.2.27"/>
<dbReference type="EMBL" id="U78773">
    <property type="protein sequence ID" value="AAB37341.1"/>
    <property type="molecule type" value="mRNA"/>
</dbReference>
<dbReference type="EMBL" id="X97548">
    <property type="protein sequence ID" value="CAA66150.1"/>
    <property type="molecule type" value="mRNA"/>
</dbReference>
<dbReference type="EMBL" id="U95040">
    <property type="protein sequence ID" value="AAB51517.1"/>
    <property type="molecule type" value="mRNA"/>
</dbReference>
<dbReference type="EMBL" id="BC004978">
    <property type="protein sequence ID" value="AAH04978.1"/>
    <property type="molecule type" value="mRNA"/>
</dbReference>
<dbReference type="EMBL" id="BC007390">
    <property type="protein sequence ID" value="AAH07390.2"/>
    <property type="molecule type" value="mRNA"/>
</dbReference>
<dbReference type="EMBL" id="BC052986">
    <property type="protein sequence ID" value="AAH52986.1"/>
    <property type="molecule type" value="mRNA"/>
</dbReference>
<dbReference type="EMBL" id="U31657">
    <property type="protein sequence ID" value="AAA74954.1"/>
    <property type="molecule type" value="mRNA"/>
</dbReference>
<dbReference type="CCDS" id="CCDS12985.1">
    <molecule id="Q13263-1"/>
</dbReference>
<dbReference type="PIR" id="G01950">
    <property type="entry name" value="G01950"/>
</dbReference>
<dbReference type="RefSeq" id="NP_005753.1">
    <molecule id="Q13263-1"/>
    <property type="nucleotide sequence ID" value="NM_005762.3"/>
</dbReference>
<dbReference type="PDB" id="1FP0">
    <property type="method" value="NMR"/>
    <property type="chains" value="A=619-679"/>
</dbReference>
<dbReference type="PDB" id="2RO1">
    <property type="method" value="NMR"/>
    <property type="chains" value="A=624-812"/>
</dbReference>
<dbReference type="PDB" id="2YVR">
    <property type="method" value="X-ray"/>
    <property type="resolution" value="1.80 A"/>
    <property type="chains" value="A/B=201-250"/>
</dbReference>
<dbReference type="PDB" id="6H3A">
    <property type="method" value="X-ray"/>
    <property type="resolution" value="5.50 A"/>
    <property type="chains" value="A/F=53-434"/>
</dbReference>
<dbReference type="PDB" id="6I9H">
    <property type="method" value="NMR"/>
    <property type="chains" value="A=54-145"/>
</dbReference>
<dbReference type="PDB" id="6QAJ">
    <property type="method" value="X-ray"/>
    <property type="resolution" value="2.90 A"/>
    <property type="chains" value="A/B=56-413"/>
</dbReference>
<dbReference type="PDB" id="6QU1">
    <property type="method" value="X-ray"/>
    <property type="resolution" value="3.70 A"/>
    <property type="chains" value="A=53-434"/>
</dbReference>
<dbReference type="PDB" id="7Z36">
    <property type="method" value="X-ray"/>
    <property type="resolution" value="2.80 A"/>
    <property type="chains" value="A/B=114-413"/>
</dbReference>
<dbReference type="PDBsum" id="1FP0"/>
<dbReference type="PDBsum" id="2RO1"/>
<dbReference type="PDBsum" id="2YVR"/>
<dbReference type="PDBsum" id="6H3A"/>
<dbReference type="PDBsum" id="6I9H"/>
<dbReference type="PDBsum" id="6QAJ"/>
<dbReference type="PDBsum" id="6QU1"/>
<dbReference type="PDBsum" id="7Z36"/>
<dbReference type="BMRB" id="Q13263"/>
<dbReference type="SASBDB" id="Q13263"/>
<dbReference type="SMR" id="Q13263"/>
<dbReference type="BioGRID" id="115457">
    <property type="interactions" value="1505"/>
</dbReference>
<dbReference type="CORUM" id="Q13263"/>
<dbReference type="DIP" id="DIP-30891N"/>
<dbReference type="ELM" id="Q13263"/>
<dbReference type="FunCoup" id="Q13263">
    <property type="interactions" value="2813"/>
</dbReference>
<dbReference type="IntAct" id="Q13263">
    <property type="interactions" value="399"/>
</dbReference>
<dbReference type="MINT" id="Q13263"/>
<dbReference type="STRING" id="9606.ENSP00000253024"/>
<dbReference type="ChEMBL" id="CHEMBL3769297"/>
<dbReference type="GlyGen" id="Q13263">
    <property type="glycosylation" value="4 sites, 1 O-linked glycan (3 sites)"/>
</dbReference>
<dbReference type="iPTMnet" id="Q13263"/>
<dbReference type="MetOSite" id="Q13263"/>
<dbReference type="PhosphoSitePlus" id="Q13263"/>
<dbReference type="SwissPalm" id="Q13263"/>
<dbReference type="BioMuta" id="TRIM28"/>
<dbReference type="DMDM" id="3183179"/>
<dbReference type="CPTAC" id="CPTAC-446"/>
<dbReference type="CPTAC" id="CPTAC-447"/>
<dbReference type="jPOST" id="Q13263"/>
<dbReference type="MassIVE" id="Q13263"/>
<dbReference type="PaxDb" id="9606-ENSP00000253024"/>
<dbReference type="PeptideAtlas" id="Q13263"/>
<dbReference type="ProteomicsDB" id="59266">
    <molecule id="Q13263-1"/>
</dbReference>
<dbReference type="ProteomicsDB" id="59267">
    <molecule id="Q13263-2"/>
</dbReference>
<dbReference type="Pumba" id="Q13263"/>
<dbReference type="ABCD" id="Q13263">
    <property type="antibodies" value="2 sequenced antibodies"/>
</dbReference>
<dbReference type="Antibodypedia" id="4109">
    <property type="antibodies" value="828 antibodies from 50 providers"/>
</dbReference>
<dbReference type="DNASU" id="10155"/>
<dbReference type="Ensembl" id="ENST00000253024.10">
    <molecule id="Q13263-1"/>
    <property type="protein sequence ID" value="ENSP00000253024.4"/>
    <property type="gene ID" value="ENSG00000130726.12"/>
</dbReference>
<dbReference type="Ensembl" id="ENST00000341753.10">
    <molecule id="Q13263-2"/>
    <property type="protein sequence ID" value="ENSP00000342232.5"/>
    <property type="gene ID" value="ENSG00000130726.12"/>
</dbReference>
<dbReference type="GeneID" id="10155"/>
<dbReference type="KEGG" id="hsa:10155"/>
<dbReference type="MANE-Select" id="ENST00000253024.10">
    <property type="protein sequence ID" value="ENSP00000253024.4"/>
    <property type="RefSeq nucleotide sequence ID" value="NM_005762.3"/>
    <property type="RefSeq protein sequence ID" value="NP_005753.1"/>
</dbReference>
<dbReference type="UCSC" id="uc002qtg.2">
    <molecule id="Q13263-1"/>
    <property type="organism name" value="human"/>
</dbReference>
<dbReference type="AGR" id="HGNC:16384"/>
<dbReference type="CTD" id="10155"/>
<dbReference type="DisGeNET" id="10155"/>
<dbReference type="GeneCards" id="TRIM28"/>
<dbReference type="HGNC" id="HGNC:16384">
    <property type="gene designation" value="TRIM28"/>
</dbReference>
<dbReference type="HPA" id="ENSG00000130726">
    <property type="expression patterns" value="Low tissue specificity"/>
</dbReference>
<dbReference type="MalaCards" id="TRIM28"/>
<dbReference type="MIM" id="601742">
    <property type="type" value="gene"/>
</dbReference>
<dbReference type="neXtProt" id="NX_Q13263"/>
<dbReference type="OpenTargets" id="ENSG00000130726"/>
<dbReference type="Orphanet" id="654">
    <property type="disease" value="Nephroblastoma"/>
</dbReference>
<dbReference type="PharmGKB" id="PA38131"/>
<dbReference type="VEuPathDB" id="HostDB:ENSG00000130726"/>
<dbReference type="eggNOG" id="KOG2177">
    <property type="taxonomic scope" value="Eukaryota"/>
</dbReference>
<dbReference type="GeneTree" id="ENSGT00940000160527"/>
<dbReference type="HOGENOM" id="CLU_005817_2_0_1"/>
<dbReference type="InParanoid" id="Q13263"/>
<dbReference type="OMA" id="DCKDEVP"/>
<dbReference type="OrthoDB" id="1870062at2759"/>
<dbReference type="PAN-GO" id="Q13263">
    <property type="GO annotations" value="11 GO annotations based on evolutionary models"/>
</dbReference>
<dbReference type="PhylomeDB" id="Q13263"/>
<dbReference type="TreeFam" id="TF106455"/>
<dbReference type="PathwayCommons" id="Q13263"/>
<dbReference type="Reactome" id="R-HSA-212436">
    <property type="pathway name" value="Generic Transcription Pathway"/>
</dbReference>
<dbReference type="Reactome" id="R-HSA-3899300">
    <property type="pathway name" value="SUMOylation of transcription cofactors"/>
</dbReference>
<dbReference type="Reactome" id="R-HSA-9609690">
    <property type="pathway name" value="HCMV Early Events"/>
</dbReference>
<dbReference type="Reactome" id="R-HSA-9843940">
    <property type="pathway name" value="Regulation of endogenous retroelements by KRAB-ZFP proteins"/>
</dbReference>
<dbReference type="SignaLink" id="Q13263"/>
<dbReference type="SIGNOR" id="Q13263"/>
<dbReference type="UniPathway" id="UPA00886"/>
<dbReference type="BioGRID-ORCS" id="10155">
    <property type="hits" value="174 hits in 1238 CRISPR screens"/>
</dbReference>
<dbReference type="CD-CODE" id="76F9ED9B">
    <property type="entry name" value="Synthetic Condensate 000325"/>
</dbReference>
<dbReference type="CD-CODE" id="8BB8BA7F">
    <property type="entry name" value="Synthetic Condensate 000324"/>
</dbReference>
<dbReference type="CD-CODE" id="91857CE7">
    <property type="entry name" value="Nucleolus"/>
</dbReference>
<dbReference type="CD-CODE" id="F5834E66">
    <property type="entry name" value="Synthetic Condensate 000310"/>
</dbReference>
<dbReference type="ChiTaRS" id="TRIM28">
    <property type="organism name" value="human"/>
</dbReference>
<dbReference type="EvolutionaryTrace" id="Q13263"/>
<dbReference type="GeneWiki" id="TRIM28"/>
<dbReference type="GenomeRNAi" id="10155"/>
<dbReference type="Pharos" id="Q13263">
    <property type="development level" value="Tbio"/>
</dbReference>
<dbReference type="PRO" id="PR:Q13263"/>
<dbReference type="Proteomes" id="UP000005640">
    <property type="component" value="Chromosome 19"/>
</dbReference>
<dbReference type="RNAct" id="Q13263">
    <property type="molecule type" value="protein"/>
</dbReference>
<dbReference type="Bgee" id="ENSG00000130726">
    <property type="expression patterns" value="Expressed in left testis and 102 other cell types or tissues"/>
</dbReference>
<dbReference type="ExpressionAtlas" id="Q13263">
    <property type="expression patterns" value="baseline and differential"/>
</dbReference>
<dbReference type="GO" id="GO:0000791">
    <property type="term" value="C:euchromatin"/>
    <property type="evidence" value="ECO:0007669"/>
    <property type="project" value="Ensembl"/>
</dbReference>
<dbReference type="GO" id="GO:0000792">
    <property type="term" value="C:heterochromatin"/>
    <property type="evidence" value="ECO:0007669"/>
    <property type="project" value="Ensembl"/>
</dbReference>
<dbReference type="GO" id="GO:0005654">
    <property type="term" value="C:nucleoplasm"/>
    <property type="evidence" value="ECO:0000314"/>
    <property type="project" value="HPA"/>
</dbReference>
<dbReference type="GO" id="GO:0005634">
    <property type="term" value="C:nucleus"/>
    <property type="evidence" value="ECO:0000314"/>
    <property type="project" value="UniProtKB"/>
</dbReference>
<dbReference type="GO" id="GO:0032991">
    <property type="term" value="C:protein-containing complex"/>
    <property type="evidence" value="ECO:0000314"/>
    <property type="project" value="UniProtKB"/>
</dbReference>
<dbReference type="GO" id="GO:0090575">
    <property type="term" value="C:RNA polymerase II transcription regulator complex"/>
    <property type="evidence" value="ECO:0000250"/>
    <property type="project" value="BHF-UCL"/>
</dbReference>
<dbReference type="GO" id="GO:0003682">
    <property type="term" value="F:chromatin binding"/>
    <property type="evidence" value="ECO:0000314"/>
    <property type="project" value="UniProtKB"/>
</dbReference>
<dbReference type="GO" id="GO:0070087">
    <property type="term" value="F:chromo shadow domain binding"/>
    <property type="evidence" value="ECO:0000353"/>
    <property type="project" value="BHF-UCL"/>
</dbReference>
<dbReference type="GO" id="GO:0003677">
    <property type="term" value="F:DNA binding"/>
    <property type="evidence" value="ECO:0000314"/>
    <property type="project" value="UniProtKB"/>
</dbReference>
<dbReference type="GO" id="GO:0035851">
    <property type="term" value="F:Krueppel-associated box domain binding"/>
    <property type="evidence" value="ECO:0000314"/>
    <property type="project" value="UniProtKB"/>
</dbReference>
<dbReference type="GO" id="GO:1990841">
    <property type="term" value="F:promoter-specific chromatin binding"/>
    <property type="evidence" value="ECO:0000314"/>
    <property type="project" value="UniProtKB"/>
</dbReference>
<dbReference type="GO" id="GO:0004672">
    <property type="term" value="F:protein kinase activity"/>
    <property type="evidence" value="ECO:0007669"/>
    <property type="project" value="Ensembl"/>
</dbReference>
<dbReference type="GO" id="GO:0003723">
    <property type="term" value="F:RNA binding"/>
    <property type="evidence" value="ECO:0007005"/>
    <property type="project" value="UniProtKB"/>
</dbReference>
<dbReference type="GO" id="GO:0019789">
    <property type="term" value="F:SUMO transferase activity"/>
    <property type="evidence" value="ECO:0000269"/>
    <property type="project" value="Reactome"/>
</dbReference>
<dbReference type="GO" id="GO:0003713">
    <property type="term" value="F:transcription coactivator activity"/>
    <property type="evidence" value="ECO:0000250"/>
    <property type="project" value="UniProtKB"/>
</dbReference>
<dbReference type="GO" id="GO:0003714">
    <property type="term" value="F:transcription corepressor activity"/>
    <property type="evidence" value="ECO:0000314"/>
    <property type="project" value="UniProtKB"/>
</dbReference>
<dbReference type="GO" id="GO:0061630">
    <property type="term" value="F:ubiquitin protein ligase activity"/>
    <property type="evidence" value="ECO:0000315"/>
    <property type="project" value="FlyBase"/>
</dbReference>
<dbReference type="GO" id="GO:0031625">
    <property type="term" value="F:ubiquitin protein ligase binding"/>
    <property type="evidence" value="ECO:0000314"/>
    <property type="project" value="UniProtKB"/>
</dbReference>
<dbReference type="GO" id="GO:0004842">
    <property type="term" value="F:ubiquitin-protein transferase activity"/>
    <property type="evidence" value="ECO:0000314"/>
    <property type="project" value="UniProtKB"/>
</dbReference>
<dbReference type="GO" id="GO:0008270">
    <property type="term" value="F:zinc ion binding"/>
    <property type="evidence" value="ECO:0000314"/>
    <property type="project" value="UniProtKB"/>
</dbReference>
<dbReference type="GO" id="GO:0006325">
    <property type="term" value="P:chromatin organization"/>
    <property type="evidence" value="ECO:0000318"/>
    <property type="project" value="GO_Central"/>
</dbReference>
<dbReference type="GO" id="GO:0060028">
    <property type="term" value="P:convergent extension involved in axis elongation"/>
    <property type="evidence" value="ECO:0007669"/>
    <property type="project" value="Ensembl"/>
</dbReference>
<dbReference type="GO" id="GO:0006346">
    <property type="term" value="P:DNA methylation-dependent constitutive heterochromatin formation"/>
    <property type="evidence" value="ECO:0000315"/>
    <property type="project" value="UniProtKB"/>
</dbReference>
<dbReference type="GO" id="GO:0006281">
    <property type="term" value="P:DNA repair"/>
    <property type="evidence" value="ECO:0000314"/>
    <property type="project" value="UniProtKB"/>
</dbReference>
<dbReference type="GO" id="GO:0007566">
    <property type="term" value="P:embryo implantation"/>
    <property type="evidence" value="ECO:0007669"/>
    <property type="project" value="Ensembl"/>
</dbReference>
<dbReference type="GO" id="GO:0060669">
    <property type="term" value="P:embryonic placenta morphogenesis"/>
    <property type="evidence" value="ECO:0007669"/>
    <property type="project" value="Ensembl"/>
</dbReference>
<dbReference type="GO" id="GO:0001837">
    <property type="term" value="P:epithelial to mesenchymal transition"/>
    <property type="evidence" value="ECO:0000250"/>
    <property type="project" value="HGNC-UCL"/>
</dbReference>
<dbReference type="GO" id="GO:0071514">
    <property type="term" value="P:genomic imprinting"/>
    <property type="evidence" value="ECO:0007669"/>
    <property type="project" value="Ensembl"/>
</dbReference>
<dbReference type="GO" id="GO:0045087">
    <property type="term" value="P:innate immune response"/>
    <property type="evidence" value="ECO:0000314"/>
    <property type="project" value="UniProtKB"/>
</dbReference>
<dbReference type="GO" id="GO:0045892">
    <property type="term" value="P:negative regulation of DNA-templated transcription"/>
    <property type="evidence" value="ECO:0000314"/>
    <property type="project" value="UniProtKB"/>
</dbReference>
<dbReference type="GO" id="GO:0045869">
    <property type="term" value="P:negative regulation of single stranded viral RNA replication via double stranded DNA intermediate"/>
    <property type="evidence" value="ECO:0007669"/>
    <property type="project" value="Ensembl"/>
</dbReference>
<dbReference type="GO" id="GO:0000122">
    <property type="term" value="P:negative regulation of transcription by RNA polymerase II"/>
    <property type="evidence" value="ECO:0007669"/>
    <property type="project" value="Ensembl"/>
</dbReference>
<dbReference type="GO" id="GO:0045739">
    <property type="term" value="P:positive regulation of DNA repair"/>
    <property type="evidence" value="ECO:0000314"/>
    <property type="project" value="UniProtKB"/>
</dbReference>
<dbReference type="GO" id="GO:0045893">
    <property type="term" value="P:positive regulation of DNA-templated transcription"/>
    <property type="evidence" value="ECO:0000250"/>
    <property type="project" value="HGNC-UCL"/>
</dbReference>
<dbReference type="GO" id="GO:0042307">
    <property type="term" value="P:positive regulation of protein import into nucleus"/>
    <property type="evidence" value="ECO:0000314"/>
    <property type="project" value="UniProtKB"/>
</dbReference>
<dbReference type="GO" id="GO:0043161">
    <property type="term" value="P:proteasome-mediated ubiquitin-dependent protein catabolic process"/>
    <property type="evidence" value="ECO:0000315"/>
    <property type="project" value="FlyBase"/>
</dbReference>
<dbReference type="GO" id="GO:0016925">
    <property type="term" value="P:protein sumoylation"/>
    <property type="evidence" value="ECO:0000314"/>
    <property type="project" value="UniProtKB"/>
</dbReference>
<dbReference type="GO" id="GO:0044790">
    <property type="term" value="P:suppression of viral release by host"/>
    <property type="evidence" value="ECO:0000314"/>
    <property type="project" value="UniProtKB"/>
</dbReference>
<dbReference type="CDD" id="cd19846">
    <property type="entry name" value="Bbox1_TIF1b_C-VI"/>
    <property type="match status" value="1"/>
</dbReference>
<dbReference type="CDD" id="cd19829">
    <property type="entry name" value="Bbox2_TIF1b_C-VI"/>
    <property type="match status" value="1"/>
</dbReference>
<dbReference type="CDD" id="cd05502">
    <property type="entry name" value="Bromo_tif1_like"/>
    <property type="match status" value="1"/>
</dbReference>
<dbReference type="CDD" id="cd15623">
    <property type="entry name" value="PHD_TIF1beta"/>
    <property type="match status" value="1"/>
</dbReference>
<dbReference type="CDD" id="cd16765">
    <property type="entry name" value="RING-HC_TIF1beta"/>
    <property type="match status" value="1"/>
</dbReference>
<dbReference type="FunFam" id="1.20.920.10:FF:000030">
    <property type="entry name" value="transcription intermediary factor 1-beta"/>
    <property type="match status" value="1"/>
</dbReference>
<dbReference type="FunFam" id="3.30.40.10:FF:000272">
    <property type="entry name" value="transcription intermediary factor 1-beta"/>
    <property type="match status" value="1"/>
</dbReference>
<dbReference type="FunFam" id="3.30.160.60:FF:000074">
    <property type="entry name" value="Tripartite motif containing 66"/>
    <property type="match status" value="1"/>
</dbReference>
<dbReference type="Gene3D" id="1.20.920.10">
    <property type="entry name" value="Bromodomain-like"/>
    <property type="match status" value="1"/>
</dbReference>
<dbReference type="Gene3D" id="3.30.160.60">
    <property type="entry name" value="Classic Zinc Finger"/>
    <property type="match status" value="1"/>
</dbReference>
<dbReference type="Gene3D" id="3.30.40.10">
    <property type="entry name" value="Zinc/RING finger domain, C3HC4 (zinc finger)"/>
    <property type="match status" value="2"/>
</dbReference>
<dbReference type="InterPro" id="IPR003649">
    <property type="entry name" value="Bbox_C"/>
</dbReference>
<dbReference type="InterPro" id="IPR001487">
    <property type="entry name" value="Bromodomain"/>
</dbReference>
<dbReference type="InterPro" id="IPR036427">
    <property type="entry name" value="Bromodomain-like_sf"/>
</dbReference>
<dbReference type="InterPro" id="IPR037373">
    <property type="entry name" value="KAP1"/>
</dbReference>
<dbReference type="InterPro" id="IPR047059">
    <property type="entry name" value="TIF1b_Bbox1_Znf"/>
</dbReference>
<dbReference type="InterPro" id="IPR047058">
    <property type="entry name" value="TIF1b_Bbox2_Znf"/>
</dbReference>
<dbReference type="InterPro" id="IPR042713">
    <property type="entry name" value="TIF1beta_RING-HC"/>
</dbReference>
<dbReference type="InterPro" id="IPR019786">
    <property type="entry name" value="Zinc_finger_PHD-type_CS"/>
</dbReference>
<dbReference type="InterPro" id="IPR000315">
    <property type="entry name" value="Znf_B-box"/>
</dbReference>
<dbReference type="InterPro" id="IPR011011">
    <property type="entry name" value="Znf_FYVE_PHD"/>
</dbReference>
<dbReference type="InterPro" id="IPR001965">
    <property type="entry name" value="Znf_PHD"/>
</dbReference>
<dbReference type="InterPro" id="IPR019787">
    <property type="entry name" value="Znf_PHD-finger"/>
</dbReference>
<dbReference type="InterPro" id="IPR001841">
    <property type="entry name" value="Znf_RING"/>
</dbReference>
<dbReference type="InterPro" id="IPR013083">
    <property type="entry name" value="Znf_RING/FYVE/PHD"/>
</dbReference>
<dbReference type="PANTHER" id="PTHR45915">
    <property type="entry name" value="TRANSCRIPTION INTERMEDIARY FACTOR"/>
    <property type="match status" value="1"/>
</dbReference>
<dbReference type="PANTHER" id="PTHR45915:SF8">
    <property type="entry name" value="TRIPARTITE MOTIF CONTAINING 28"/>
    <property type="match status" value="1"/>
</dbReference>
<dbReference type="Pfam" id="PF00628">
    <property type="entry name" value="PHD"/>
    <property type="match status" value="1"/>
</dbReference>
<dbReference type="Pfam" id="PF00643">
    <property type="entry name" value="zf-B_box"/>
    <property type="match status" value="2"/>
</dbReference>
<dbReference type="Pfam" id="PF14634">
    <property type="entry name" value="zf-RING_5"/>
    <property type="match status" value="1"/>
</dbReference>
<dbReference type="SMART" id="SM00502">
    <property type="entry name" value="BBC"/>
    <property type="match status" value="1"/>
</dbReference>
<dbReference type="SMART" id="SM00336">
    <property type="entry name" value="BBOX"/>
    <property type="match status" value="2"/>
</dbReference>
<dbReference type="SMART" id="SM00297">
    <property type="entry name" value="BROMO"/>
    <property type="match status" value="1"/>
</dbReference>
<dbReference type="SMART" id="SM00249">
    <property type="entry name" value="PHD"/>
    <property type="match status" value="1"/>
</dbReference>
<dbReference type="SMART" id="SM00184">
    <property type="entry name" value="RING"/>
    <property type="match status" value="2"/>
</dbReference>
<dbReference type="SUPFAM" id="SSF57845">
    <property type="entry name" value="B-box zinc-binding domain"/>
    <property type="match status" value="1"/>
</dbReference>
<dbReference type="SUPFAM" id="SSF57903">
    <property type="entry name" value="FYVE/PHD zinc finger"/>
    <property type="match status" value="1"/>
</dbReference>
<dbReference type="SUPFAM" id="SSF57850">
    <property type="entry name" value="RING/U-box"/>
    <property type="match status" value="1"/>
</dbReference>
<dbReference type="PROSITE" id="PS50014">
    <property type="entry name" value="BROMODOMAIN_2"/>
    <property type="match status" value="1"/>
</dbReference>
<dbReference type="PROSITE" id="PS50119">
    <property type="entry name" value="ZF_BBOX"/>
    <property type="match status" value="2"/>
</dbReference>
<dbReference type="PROSITE" id="PS01359">
    <property type="entry name" value="ZF_PHD_1"/>
    <property type="match status" value="1"/>
</dbReference>
<dbReference type="PROSITE" id="PS50016">
    <property type="entry name" value="ZF_PHD_2"/>
    <property type="match status" value="1"/>
</dbReference>
<dbReference type="PROSITE" id="PS50089">
    <property type="entry name" value="ZF_RING_2"/>
    <property type="match status" value="1"/>
</dbReference>
<comment type="function">
    <text evidence="2 9 13 14 15 17 19 20 23 24 26 27 32 34 35 37 40 41 42 46 52 53">Nuclear corepressor for KRAB domain-containing zinc finger proteins (KRAB-ZFPs). Mediates gene silencing by recruiting CHD3, a subunit of the nucleosome remodeling and deacetylation (NuRD) complex, and SETDB1 (which specifically methylates histone H3 at 'Lys-9' (H3K9me)) to the promoter regions of KRAB target genes. Enhances transcriptional repression by coordinating the increase in H3K9me, the decrease in histone H3 'Lys-9 and 'Lys-14' acetylation (H3K9ac and H3K14ac, respectively) and the disposition of HP1 proteins to silence gene expression. Recruitment of SETDB1 induces heterochromatinization. May play a role as a coactivator for CEBPB and NR3C1 in the transcriptional activation of ORM1. Also a corepressor for ERBB4. Inhibits E2F1 activity by stimulating E2F1-HDAC1 complex formation and inhibiting E2F1 acetylation. May serve as a partial backup to prevent E2F1-mediated apoptosis in the absence of RB1. Important regulator of CDKN1A/p21(CIP1). Has E3 SUMO-protein ligase activity toward itself via its PHD-type zinc finger. Also specifically sumoylates IRF7, thereby inhibiting its transactivation activity. Ubiquitinates p53/TP53 leading to its proteasomal degradation; the function is enhanced by MAGEC2 and MAGEA2, and possibly MAGEA3 and MAGEA6. Mediates the nuclear localization of KOX1, ZNF268 and ZNF300 transcription factors. In association with isoform 2 of ZFP90, is required for the transcriptional repressor activity of FOXP3 and the suppressive function of regulatory T-cells (Treg) (PubMed:23543754). Probably forms a corepressor complex required for activated KRAS-mediated promoter hypermethylation and transcriptional silencing of tumor suppressor genes (TSGs) or other tumor-related genes in colorectal cancer (CRC) cells (PubMed:24623306). Required to maintain a transcriptionally repressive state of genes in undifferentiated embryonic stem cells (ESCs) (PubMed:24623306). In ESCs, in collaboration with SETDB1, is also required for H3K9me3 and silencing of endogenous and introduced retroviruses in a DNA-methylation independent-pathway (By similarity). Associates at promoter regions of tumor suppressor genes (TSGs) leading to their gene silencing (PubMed:24623306). The SETDB1-TRIM28-ZNF274 complex may play a role in recruiting ATRX to the 3'-exons of zinc-finger coding genes with atypical chromatin signatures to establish or maintain/protect H3K9me3 at these transcriptionally active regions (PubMed:27029610).</text>
</comment>
<comment type="function">
    <text evidence="44">(Microbial infection) Plays a critical role in the shutdown of lytic gene expression during the early stage of herpes virus 8 primary infection. This inhibition is mediated through interaction with herpes virus 8 protein LANA1.</text>
</comment>
<comment type="catalytic activity">
    <reaction>
        <text>S-ubiquitinyl-[E2 ubiquitin-conjugating enzyme]-L-cysteine + [acceptor protein]-L-lysine = [E2 ubiquitin-conjugating enzyme]-L-cysteine + N(6)-ubiquitinyl-[acceptor protein]-L-lysine.</text>
        <dbReference type="EC" id="2.3.2.27"/>
    </reaction>
</comment>
<comment type="pathway">
    <text>Protein modification; protein sumoylation.</text>
</comment>
<comment type="subunit">
    <text evidence="2 8 9 10 11 12 13 14 15 16 18 19 22 23 25 26 27 28 29 30 32 33 34 35 36 37 38 39 40 41 42 43 46 47 48 49 50 51 53">Interacts with SETX (PubMed:23149945). Oligomer; the RBCC domain homotrimerizes and interacts with one molecule of KRAB to form the KRAB-KAP1 corepressor complex. Binding to a KRAB domain is an absolute requirement for silencing gene expression. Interacts with CEBPB and NR3C1. Interacts with a number of KRAB-ZFP proteins including ZNF10, ZFP53, ZFP68, ZNF382 and ZNF256. Interacts with NCOR1, NR3C1 and CHD3. Interacts with CEBPB (via the RING-type and PHD-type zinc fingers). Component of a ternary complex that includes TRIM28, a HP1 protein (CBX1, CBX3 OR CBX5), a KRAB domain-containing protein, and DNA. Interacts with CBX5 (via the PxVxL motif); the interaction occurs in interphase nuclei and competes for binding POGZ. Interacts with POGZ; the interaction competes for interaction with CBX5. Interacts with SETDB1; the interaction is enhanced by KAP1 sumoylation, stimulates SETDB1 histone methyltransferase activity and gene silencing. Interacts (via the PHD-type zinc finger) with UBE2I; the interaction is required for sumoylation and repressor activity. Component of the TRIM28/KAP1-ERBB4-MDM2 complex involved in connecting growth factor and DNA damage responses. Interacts directly with ERBB4; the interaction represses ERBB4-mediated transcription activity. Interacts with MDM2; the interaction contributes to p53/TP53 inactivation. Component of the TRIM28/KAP1-MDM2-p53/TP53; involved in regulating p53/TP53 stabilization and activity. Interacts (via the leucine zipper alpha helical coiled-coil) with E2F1 (central region); the interaction inhibits E2F1 acetylation and transcriptional activity. Interacts with PPP1CA; the interaction dephosphorylates TRIM28 at Ser-824 and forms a complex at the p21 promoter site. Interacts with PPP1CB; the interaction is weak but is increased on dephosphorylation at Ser-824. Interacts with FES/FPS. Interacts with SMARCAD1. Interacts with, and sumoylates IRF7. Interacts with MAGEC2. Part of a complex composed of TRIM28, HDAC1, HDAC2 and EHMT2 (PubMed:21549307). Interacts with AICDA (By similarity). Interacts (via the RBCC domain) with KOX1 (via the KRAB domain), ZNF268 (via the KRAB domain) and ZNF300 (via the KRAB domain); the interactions increase KOX1, ZNF268 and ZNF300 nuclear localization activities. The large PER complex involved in the histone methylation is composed of at least PER2, CBX3, TRIM28, SUV39H1 and/or SUV39H2; CBX3 mediates the formation of the complex. Interacts with isoform 2 of ZFP90. Forms a complex with FOXP3 in the presence of isoform 2 of ZFP90. Interacts with NR4A3; the interactions potentiates NR4A3 activity on NurRE promoter (By similarity). Interacts (unphosphorylated or phosphorylated form) with ZBTB1 (via BTB domain) (PubMed:24657165). Probably part of a corepressor complex containing ZNF304, TRIM28, SETDB1 and DNMT1 (PubMed:24623306). Interacts with ATRX. Forms a complex with ATRX, SETDB1 and ZNF274 (PubMed:27029610). Interacts with ZFP568; the interaction mediates ZFP568 transcriptional repression activity (By similarity). Interacts with RRP1B (PubMed:19710015). Interacts with CRY1 (By similarity). Interacts with ZNF263; recruited to the SIX3 promoter along with other proteins involved in chromatin modification and transcriptional corepression where it contributes to transcriptional repression (PubMed:32051553). Interacts with CYREN (via XLF motif) (By similarity). Interacts with TRIM17; this interaction prevents TRIM28 activity (PubMed:30042493). Interacts with ZNF746 (PubMed:31856708). Interacts with PHF13 (PubMed:23034801). Interacts with ZNF354C (PubMed:33154469). Interacts with ZNF432; the interaction is independent of PARP1 (PubMed:37823600).</text>
</comment>
<comment type="subunit">
    <text evidence="44">(Microbial infection) Interacts with herpes virus 8 protein LANA1; this interaction facilitates establishment of viral latency.</text>
</comment>
<comment type="interaction">
    <interactant intactId="EBI-78139">
        <id>Q13263</id>
    </interactant>
    <interactant intactId="EBI-78176">
        <id>Q13185</id>
        <label>CBX3</label>
    </interactant>
    <organismsDiffer>false</organismsDiffer>
    <experiments>8</experiments>
</comment>
<comment type="interaction">
    <interactant intactId="EBI-78139">
        <id>Q13263</id>
    </interactant>
    <interactant intactId="EBI-78219">
        <id>P45973</id>
        <label>CBX5</label>
    </interactant>
    <organismsDiffer>false</organismsDiffer>
    <experiments>15</experiments>
</comment>
<comment type="interaction">
    <interactant intactId="EBI-78139">
        <id>Q13263</id>
    </interactant>
    <interactant intactId="EBI-523590">
        <id>Q12873</id>
        <label>CHD3</label>
    </interactant>
    <organismsDiffer>false</organismsDiffer>
    <experiments>4</experiments>
</comment>
<comment type="interaction">
    <interactant intactId="EBI-78139">
        <id>Q13263</id>
    </interactant>
    <interactant intactId="EBI-3931258">
        <id>Q13568</id>
        <label>IRF5</label>
    </interactant>
    <organismsDiffer>false</organismsDiffer>
    <experiments>5</experiments>
</comment>
<comment type="interaction">
    <interactant intactId="EBI-78139">
        <id>Q13263</id>
    </interactant>
    <interactant intactId="EBI-5650739">
        <id>P43356</id>
        <label>MAGEA2B</label>
    </interactant>
    <organismsDiffer>false</organismsDiffer>
    <experiments>6</experiments>
</comment>
<comment type="interaction">
    <interactant intactId="EBI-78139">
        <id>Q13263</id>
    </interactant>
    <interactant intactId="EBI-5651459">
        <id>P43357</id>
        <label>MAGEA3</label>
    </interactant>
    <organismsDiffer>false</organismsDiffer>
    <experiments>3</experiments>
</comment>
<comment type="interaction">
    <interactant intactId="EBI-78139">
        <id>Q13263</id>
    </interactant>
    <interactant intactId="EBI-1045155">
        <id>P43360</id>
        <label>MAGEA6</label>
    </interactant>
    <organismsDiffer>false</organismsDiffer>
    <experiments>2</experiments>
</comment>
<comment type="interaction">
    <interactant intactId="EBI-78139">
        <id>Q13263</id>
    </interactant>
    <interactant intactId="EBI-5651487">
        <id>Q9UBF1</id>
        <label>MAGEC2</label>
    </interactant>
    <organismsDiffer>false</organismsDiffer>
    <experiments>14</experiments>
</comment>
<comment type="interaction">
    <interactant intactId="EBI-78139">
        <id>Q13263</id>
    </interactant>
    <interactant intactId="EBI-949966">
        <id>Q9HCI5</id>
        <label>MAGEE1</label>
    </interactant>
    <organismsDiffer>false</organismsDiffer>
    <experiments>2</experiments>
</comment>
<comment type="interaction">
    <interactant intactId="EBI-78139">
        <id>Q13263</id>
    </interactant>
    <interactant intactId="EBI-347233">
        <id>O75376</id>
        <label>NCOR1</label>
    </interactant>
    <organismsDiffer>false</organismsDiffer>
    <experiments>4</experiments>
</comment>
<comment type="interaction">
    <interactant intactId="EBI-78139">
        <id>Q13263</id>
    </interactant>
    <interactant intactId="EBI-766251">
        <id>Q9BQF6</id>
        <label>SENP7</label>
    </interactant>
    <organismsDiffer>false</organismsDiffer>
    <experiments>3</experiments>
</comment>
<comment type="interaction">
    <interactant intactId="EBI-78139">
        <id>Q13263</id>
    </interactant>
    <interactant intactId="EBI-13623587">
        <id>Q9NU63</id>
        <label>ZFP57</label>
    </interactant>
    <organismsDiffer>false</organismsDiffer>
    <experiments>2</experiments>
</comment>
<comment type="interaction">
    <interactant intactId="EBI-78139">
        <id>Q13263</id>
    </interactant>
    <interactant intactId="EBI-11419904">
        <id>Q8TF47-3</id>
        <label>ZFP90</label>
    </interactant>
    <organismsDiffer>false</organismsDiffer>
    <experiments>2</experiments>
</comment>
<comment type="interaction">
    <interactant intactId="EBI-78139">
        <id>Q13263</id>
    </interactant>
    <interactant intactId="EBI-1105324">
        <id>P21506</id>
        <label>ZNF10</label>
    </interactant>
    <organismsDiffer>false</organismsDiffer>
    <experiments>3</experiments>
</comment>
<comment type="interaction">
    <interactant intactId="EBI-78139">
        <id>Q13263</id>
    </interactant>
    <interactant intactId="EBI-749129">
        <id>P52737</id>
        <label>ZNF136</label>
    </interactant>
    <organismsDiffer>false</organismsDiffer>
    <experiments>2</experiments>
</comment>
<comment type="interaction">
    <interactant intactId="EBI-78139">
        <id>Q13263</id>
    </interactant>
    <interactant intactId="EBI-8489497">
        <id>Q96JL9</id>
        <label>ZNF333</label>
    </interactant>
    <organismsDiffer>false</organismsDiffer>
    <experiments>4</experiments>
</comment>
<comment type="interaction">
    <interactant intactId="EBI-78139">
        <id>Q13263</id>
    </interactant>
    <interactant intactId="EBI-396421">
        <id>Q9GZX5</id>
        <label>ZNF350</label>
    </interactant>
    <organismsDiffer>false</organismsDiffer>
    <experiments>2</experiments>
</comment>
<comment type="interaction">
    <interactant intactId="EBI-78139">
        <id>Q13263</id>
    </interactant>
    <interactant intactId="EBI-4395669">
        <id>Q6ZNG0</id>
        <label>ZNF620</label>
    </interactant>
    <organismsDiffer>false</organismsDiffer>
    <experiments>4</experiments>
</comment>
<comment type="interaction">
    <interactant intactId="EBI-78139">
        <id>Q13263</id>
    </interactant>
    <interactant intactId="EBI-21783898">
        <id>Q6ZSS3</id>
        <label>ZNF621</label>
    </interactant>
    <organismsDiffer>false</organismsDiffer>
    <experiments>2</experiments>
</comment>
<comment type="interaction">
    <interactant intactId="EBI-78139">
        <id>Q13263</id>
    </interactant>
    <interactant intactId="EBI-4395789">
        <id>Q9BS31</id>
        <label>ZNF649</label>
    </interactant>
    <organismsDiffer>false</organismsDiffer>
    <experiments>3</experiments>
</comment>
<comment type="interaction">
    <interactant intactId="EBI-78139">
        <id>Q13263</id>
    </interactant>
    <interactant intactId="EBI-9676069">
        <id>Q7L2R6</id>
        <label>ZNF765</label>
    </interactant>
    <organismsDiffer>false</organismsDiffer>
    <experiments>3</experiments>
</comment>
<comment type="interaction">
    <interactant intactId="EBI-78139">
        <id>Q13263</id>
    </interactant>
    <interactant intactId="EBI-2849074">
        <id>P51523</id>
        <label>ZNF84</label>
    </interactant>
    <organismsDiffer>false</organismsDiffer>
    <experiments>4</experiments>
</comment>
<comment type="interaction">
    <interactant intactId="EBI-78139">
        <id>Q13263</id>
    </interactant>
    <interactant intactId="EBI-78119">
        <id>P83917</id>
        <label>Cbx1</label>
    </interactant>
    <organismsDiffer>true</organismsDiffer>
    <experiments>2</experiments>
</comment>
<comment type="interaction">
    <interactant intactId="EBI-78139">
        <id>Q13263</id>
    </interactant>
    <interactant intactId="EBI-78162">
        <id>P23198</id>
        <label>Cbx3</label>
    </interactant>
    <organismsDiffer>true</organismsDiffer>
    <experiments>2</experiments>
</comment>
<comment type="subcellular location">
    <subcellularLocation>
        <location evidence="8 20 34 41 44 45 53">Nucleus</location>
    </subcellularLocation>
    <text evidence="2 45">Associated with centromeric heterochromatin during cell differentiation through CBX1 (By similarity). Localizes to sites of DNA damage (PubMed:25593309).</text>
</comment>
<comment type="alternative products">
    <event type="alternative splicing"/>
    <isoform>
        <id>Q13263-1</id>
        <name>1</name>
        <sequence type="displayed"/>
    </isoform>
    <isoform>
        <id>Q13263-2</id>
        <name>2</name>
        <sequence type="described" ref="VSP_010898"/>
    </isoform>
</comment>
<comment type="tissue specificity">
    <text evidence="53">Expressed in all tissues tested including spleen, thymus, prostate, testis, ovary, small intestine, colon and peripheral blood leukocytes.</text>
</comment>
<comment type="domain">
    <text evidence="27">The HP1 box is both necessary and sufficient for HP1 binding.</text>
</comment>
<comment type="domain">
    <text evidence="27">The PHD-type zinc finger enhances CEBPB transcriptional activity. The PHD-type zinc finger, the HP1 box and the bromo domain, function together to assemble the machinery required for repression of KRAB domain-containing proteins. Acts as an intramolecular SUMO E3 ligase for autosumoylation of bromodomain.</text>
</comment>
<comment type="domain">
    <text evidence="27">The RING-finger-B Box-coiled-coil/tripartite motif (RBCC/TRIM motif) is required for interaction with the KRAB domain of KRAB-zinc finger proteins. Binds four zinc ions per molecule. The RING finger and the N-terminal of the leucine zipper alpha helical coiled-coil region of RBCC are required for oligomerization.</text>
</comment>
<comment type="domain">
    <text evidence="27">Contains one Pro-Xaa-Val-Xaa-Leu (PxVxL) motif, which is required for interaction with chromoshadow domains. This motif requires additional residues -7, -6, +4 and +5 of the central Val which contact the chromoshadow domain.</text>
</comment>
<comment type="PTM">
    <text evidence="17 20 24 32">ATM-induced phosphorylation on Ser-824 represses sumoylation leading to the de-repression of expression of a subset of genes involved in cell cycle control and apoptosis in response to genotoxic stress. Dephosphorylation by the phosphatases, PPP1CA and PP1CB forms, allows sumoylation and expression of TRIM28 target genes.</text>
</comment>
<comment type="PTM">
    <text evidence="17 19 20 24 28 31 32">Sumoylation/desumoylation events regulate TRIM28-mediated transcriptional repression. Sumoylation is required for interaction with CHD3 and SETDB1 and the corepressor activity. Represses and is repressed by Ser-824 phosphorylation. Enhances the TRIM28 corepressor activity, inhibiting transcriptional activity of a number of genes including GADD45A and CDKN1A/p21. Lys-554, Lys-779 and Lys-804 are the major sites of sumoylation. In response to Dox-induced DNA damage, enhanced phosphorylation on Ser-824 prevents sumoylation and allows de-repression of CDKN1A/p21.</text>
</comment>
<comment type="PTM">
    <text evidence="35">Auto-ubiquitinated; enhanced by MAGEA2 and MAGEC2.</text>
</comment>
<comment type="PTM">
    <text evidence="2">Citrullinated by PADI4.</text>
</comment>
<comment type="PTM">
    <text evidence="2">ADP-ribosylated by SIRT6, promoting TRIM28/KAP1 interaction with CBX5, thereby contributing to the packaging of LINE-1 retrotransposon elements into transcriptionally repressive heterochromatin.</text>
</comment>
<comment type="similarity">
    <text evidence="57">Belongs to the TRIM/RBCC family.</text>
</comment>
<gene>
    <name evidence="58" type="primary">TRIM28</name>
    <name type="synonym">KAP1</name>
    <name type="synonym">RNF96</name>
    <name type="synonym">TIF1B</name>
</gene>
<organism>
    <name type="scientific">Homo sapiens</name>
    <name type="common">Human</name>
    <dbReference type="NCBI Taxonomy" id="9606"/>
    <lineage>
        <taxon>Eukaryota</taxon>
        <taxon>Metazoa</taxon>
        <taxon>Chordata</taxon>
        <taxon>Craniata</taxon>
        <taxon>Vertebrata</taxon>
        <taxon>Euteleostomi</taxon>
        <taxon>Mammalia</taxon>
        <taxon>Eutheria</taxon>
        <taxon>Euarchontoglires</taxon>
        <taxon>Primates</taxon>
        <taxon>Haplorrhini</taxon>
        <taxon>Catarrhini</taxon>
        <taxon>Hominidae</taxon>
        <taxon>Homo</taxon>
    </lineage>
</organism>